<gene>
    <name type="primary">SYK</name>
</gene>
<dbReference type="EC" id="2.7.10.2" evidence="5 23 24"/>
<dbReference type="EMBL" id="Z29630">
    <property type="protein sequence ID" value="CAA82737.1"/>
    <property type="molecule type" value="mRNA"/>
</dbReference>
<dbReference type="EMBL" id="L28824">
    <property type="protein sequence ID" value="AAA36526.1"/>
    <property type="molecule type" value="mRNA"/>
</dbReference>
<dbReference type="EMBL" id="AL354862">
    <property type="status" value="NOT_ANNOTATED_CDS"/>
    <property type="molecule type" value="Genomic_DNA"/>
</dbReference>
<dbReference type="EMBL" id="BC001645">
    <property type="protein sequence ID" value="AAH01645.1"/>
    <property type="molecule type" value="mRNA"/>
</dbReference>
<dbReference type="EMBL" id="BC011399">
    <property type="protein sequence ID" value="AAH11399.1"/>
    <property type="molecule type" value="mRNA"/>
</dbReference>
<dbReference type="EMBL" id="BC002962">
    <property type="protein sequence ID" value="AAH02962.1"/>
    <property type="molecule type" value="mRNA"/>
</dbReference>
<dbReference type="EMBL" id="X73568">
    <property type="protein sequence ID" value="CAA51970.1"/>
    <property type="molecule type" value="mRNA"/>
</dbReference>
<dbReference type="CCDS" id="CCDS47992.1">
    <molecule id="P43405-2"/>
</dbReference>
<dbReference type="CCDS" id="CCDS6688.1">
    <molecule id="P43405-1"/>
</dbReference>
<dbReference type="PIR" id="A53596">
    <property type="entry name" value="A53596"/>
</dbReference>
<dbReference type="RefSeq" id="NP_001128524.1">
    <molecule id="P43405-2"/>
    <property type="nucleotide sequence ID" value="NM_001135052.4"/>
</dbReference>
<dbReference type="RefSeq" id="NP_001167638.1">
    <molecule id="P43405-1"/>
    <property type="nucleotide sequence ID" value="NM_001174167.3"/>
</dbReference>
<dbReference type="RefSeq" id="NP_001167639.1">
    <molecule id="P43405-2"/>
    <property type="nucleotide sequence ID" value="NM_001174168.3"/>
</dbReference>
<dbReference type="RefSeq" id="NP_003168.2">
    <molecule id="P43405-1"/>
    <property type="nucleotide sequence ID" value="NM_003177.6"/>
</dbReference>
<dbReference type="RefSeq" id="XP_005252204.1">
    <molecule id="P43405-1"/>
    <property type="nucleotide sequence ID" value="XM_005252147.5"/>
</dbReference>
<dbReference type="RefSeq" id="XP_011517248.1">
    <molecule id="P43405-1"/>
    <property type="nucleotide sequence ID" value="XM_011518946.4"/>
</dbReference>
<dbReference type="RefSeq" id="XP_047279765.1">
    <molecule id="P43405-1"/>
    <property type="nucleotide sequence ID" value="XM_047423809.1"/>
</dbReference>
<dbReference type="RefSeq" id="XP_047279766.1">
    <molecule id="P43405-2"/>
    <property type="nucleotide sequence ID" value="XM_047423810.1"/>
</dbReference>
<dbReference type="RefSeq" id="XP_054219627.1">
    <molecule id="P43405-1"/>
    <property type="nucleotide sequence ID" value="XM_054363652.1"/>
</dbReference>
<dbReference type="RefSeq" id="XP_054219628.1">
    <molecule id="P43405-1"/>
    <property type="nucleotide sequence ID" value="XM_054363653.1"/>
</dbReference>
<dbReference type="RefSeq" id="XP_054219629.1">
    <molecule id="P43405-2"/>
    <property type="nucleotide sequence ID" value="XM_054363654.1"/>
</dbReference>
<dbReference type="PDB" id="1A81">
    <property type="method" value="X-ray"/>
    <property type="resolution" value="3.00 A"/>
    <property type="chains" value="A/C/E/G/I/K=9-262"/>
</dbReference>
<dbReference type="PDB" id="1CSY">
    <property type="method" value="NMR"/>
    <property type="chains" value="A=163-265"/>
</dbReference>
<dbReference type="PDB" id="1CSZ">
    <property type="method" value="NMR"/>
    <property type="chains" value="A=163-265"/>
</dbReference>
<dbReference type="PDB" id="1XBA">
    <property type="method" value="X-ray"/>
    <property type="resolution" value="2.00 A"/>
    <property type="chains" value="A=356-635"/>
</dbReference>
<dbReference type="PDB" id="1XBB">
    <property type="method" value="X-ray"/>
    <property type="resolution" value="1.57 A"/>
    <property type="chains" value="A=356-635"/>
</dbReference>
<dbReference type="PDB" id="1XBC">
    <property type="method" value="X-ray"/>
    <property type="resolution" value="2.00 A"/>
    <property type="chains" value="A=356-635"/>
</dbReference>
<dbReference type="PDB" id="3BUW">
    <property type="method" value="X-ray"/>
    <property type="resolution" value="1.45 A"/>
    <property type="chains" value="A/C=317-329"/>
</dbReference>
<dbReference type="PDB" id="3EMG">
    <property type="method" value="X-ray"/>
    <property type="resolution" value="2.60 A"/>
    <property type="chains" value="A=349-635"/>
</dbReference>
<dbReference type="PDB" id="3FQE">
    <property type="method" value="X-ray"/>
    <property type="resolution" value="2.50 A"/>
    <property type="chains" value="A=356-635"/>
</dbReference>
<dbReference type="PDB" id="3FQH">
    <property type="method" value="X-ray"/>
    <property type="resolution" value="2.26 A"/>
    <property type="chains" value="A/B=356-635"/>
</dbReference>
<dbReference type="PDB" id="3FQS">
    <property type="method" value="X-ray"/>
    <property type="resolution" value="2.10 A"/>
    <property type="chains" value="A=356-635"/>
</dbReference>
<dbReference type="PDB" id="3SRV">
    <property type="method" value="X-ray"/>
    <property type="resolution" value="1.95 A"/>
    <property type="chains" value="A/B=360-635"/>
</dbReference>
<dbReference type="PDB" id="3TUB">
    <property type="method" value="X-ray"/>
    <property type="resolution" value="2.23 A"/>
    <property type="chains" value="A=343-635"/>
</dbReference>
<dbReference type="PDB" id="3TUC">
    <property type="method" value="X-ray"/>
    <property type="resolution" value="2.10 A"/>
    <property type="chains" value="A=343-635"/>
</dbReference>
<dbReference type="PDB" id="3TUD">
    <property type="method" value="X-ray"/>
    <property type="resolution" value="2.33 A"/>
    <property type="chains" value="A=343-635"/>
</dbReference>
<dbReference type="PDB" id="3VF8">
    <property type="method" value="X-ray"/>
    <property type="resolution" value="2.08 A"/>
    <property type="chains" value="A=343-635"/>
</dbReference>
<dbReference type="PDB" id="3VF9">
    <property type="method" value="X-ray"/>
    <property type="resolution" value="2.30 A"/>
    <property type="chains" value="A=343-635"/>
</dbReference>
<dbReference type="PDB" id="4DFL">
    <property type="method" value="X-ray"/>
    <property type="resolution" value="1.98 A"/>
    <property type="chains" value="A=363-635"/>
</dbReference>
<dbReference type="PDB" id="4DFN">
    <property type="method" value="X-ray"/>
    <property type="resolution" value="2.48 A"/>
    <property type="chains" value="A=363-635"/>
</dbReference>
<dbReference type="PDB" id="4F4P">
    <property type="method" value="X-ray"/>
    <property type="resolution" value="2.37 A"/>
    <property type="chains" value="A=365-635"/>
</dbReference>
<dbReference type="PDB" id="4FL1">
    <property type="method" value="X-ray"/>
    <property type="resolution" value="1.79 A"/>
    <property type="chains" value="A=356-635"/>
</dbReference>
<dbReference type="PDB" id="4FL2">
    <property type="method" value="X-ray"/>
    <property type="resolution" value="2.19 A"/>
    <property type="chains" value="A=1-635"/>
</dbReference>
<dbReference type="PDB" id="4FL3">
    <property type="method" value="X-ray"/>
    <property type="resolution" value="1.90 A"/>
    <property type="chains" value="A=1-635"/>
</dbReference>
<dbReference type="PDB" id="4FYN">
    <property type="method" value="X-ray"/>
    <property type="resolution" value="2.32 A"/>
    <property type="chains" value="A=356-635"/>
</dbReference>
<dbReference type="PDB" id="4FYO">
    <property type="method" value="X-ray"/>
    <property type="resolution" value="1.40 A"/>
    <property type="chains" value="A=356-635"/>
</dbReference>
<dbReference type="PDB" id="4FZ6">
    <property type="method" value="X-ray"/>
    <property type="resolution" value="1.85 A"/>
    <property type="chains" value="A=356-635"/>
</dbReference>
<dbReference type="PDB" id="4FZ7">
    <property type="method" value="X-ray"/>
    <property type="resolution" value="1.75 A"/>
    <property type="chains" value="A=356-635"/>
</dbReference>
<dbReference type="PDB" id="4GFG">
    <property type="method" value="X-ray"/>
    <property type="resolution" value="2.35 A"/>
    <property type="chains" value="A=356-635"/>
</dbReference>
<dbReference type="PDB" id="4I0R">
    <property type="method" value="X-ray"/>
    <property type="resolution" value="2.10 A"/>
    <property type="chains" value="A=356-635"/>
</dbReference>
<dbReference type="PDB" id="4I0S">
    <property type="method" value="X-ray"/>
    <property type="resolution" value="1.98 A"/>
    <property type="chains" value="A=356-635"/>
</dbReference>
<dbReference type="PDB" id="4I0T">
    <property type="method" value="X-ray"/>
    <property type="resolution" value="1.70 A"/>
    <property type="chains" value="A=356-635"/>
</dbReference>
<dbReference type="PDB" id="4PUZ">
    <property type="method" value="X-ray"/>
    <property type="resolution" value="2.08 A"/>
    <property type="chains" value="A/B=356-635"/>
</dbReference>
<dbReference type="PDB" id="4PV0">
    <property type="method" value="X-ray"/>
    <property type="resolution" value="2.00 A"/>
    <property type="chains" value="A=363-635"/>
</dbReference>
<dbReference type="PDB" id="4PX6">
    <property type="method" value="X-ray"/>
    <property type="resolution" value="1.60 A"/>
    <property type="chains" value="A=356-635"/>
</dbReference>
<dbReference type="PDB" id="4RSS">
    <property type="method" value="X-ray"/>
    <property type="resolution" value="1.83 A"/>
    <property type="chains" value="A=356-635"/>
</dbReference>
<dbReference type="PDB" id="4RX7">
    <property type="method" value="X-ray"/>
    <property type="resolution" value="1.80 A"/>
    <property type="chains" value="A=356-635"/>
</dbReference>
<dbReference type="PDB" id="4RX8">
    <property type="method" value="X-ray"/>
    <property type="resolution" value="1.59 A"/>
    <property type="chains" value="A=356-635"/>
</dbReference>
<dbReference type="PDB" id="4RX9">
    <property type="method" value="X-ray"/>
    <property type="resolution" value="1.75 A"/>
    <property type="chains" value="A=356-635"/>
</dbReference>
<dbReference type="PDB" id="4WNM">
    <property type="method" value="X-ray"/>
    <property type="resolution" value="2.50 A"/>
    <property type="chains" value="A=343-635"/>
</dbReference>
<dbReference type="PDB" id="4XG2">
    <property type="method" value="X-ray"/>
    <property type="resolution" value="2.21 A"/>
    <property type="chains" value="A=356-635"/>
</dbReference>
<dbReference type="PDB" id="4XG3">
    <property type="method" value="X-ray"/>
    <property type="resolution" value="2.30 A"/>
    <property type="chains" value="A/B=356-635"/>
</dbReference>
<dbReference type="PDB" id="4XG4">
    <property type="method" value="X-ray"/>
    <property type="resolution" value="2.30 A"/>
    <property type="chains" value="A=356-635"/>
</dbReference>
<dbReference type="PDB" id="4XG6">
    <property type="method" value="X-ray"/>
    <property type="resolution" value="2.40 A"/>
    <property type="chains" value="A=356-635"/>
</dbReference>
<dbReference type="PDB" id="4XG7">
    <property type="method" value="X-ray"/>
    <property type="resolution" value="1.76 A"/>
    <property type="chains" value="A=356-635"/>
</dbReference>
<dbReference type="PDB" id="4XG8">
    <property type="method" value="X-ray"/>
    <property type="resolution" value="2.40 A"/>
    <property type="chains" value="A/C=356-635"/>
</dbReference>
<dbReference type="PDB" id="4XG9">
    <property type="method" value="X-ray"/>
    <property type="resolution" value="2.91 A"/>
    <property type="chains" value="A/B=356-635"/>
</dbReference>
<dbReference type="PDB" id="4YJO">
    <property type="method" value="X-ray"/>
    <property type="resolution" value="1.60 A"/>
    <property type="chains" value="A=355-635"/>
</dbReference>
<dbReference type="PDB" id="4YJP">
    <property type="method" value="X-ray"/>
    <property type="resolution" value="1.83 A"/>
    <property type="chains" value="A=355-635"/>
</dbReference>
<dbReference type="PDB" id="4YJQ">
    <property type="method" value="X-ray"/>
    <property type="resolution" value="1.34 A"/>
    <property type="chains" value="A=355-635"/>
</dbReference>
<dbReference type="PDB" id="4YJR">
    <property type="method" value="X-ray"/>
    <property type="resolution" value="1.32 A"/>
    <property type="chains" value="A=355-635"/>
</dbReference>
<dbReference type="PDB" id="4YJS">
    <property type="method" value="X-ray"/>
    <property type="resolution" value="2.22 A"/>
    <property type="chains" value="A=355-635"/>
</dbReference>
<dbReference type="PDB" id="4YJT">
    <property type="method" value="X-ray"/>
    <property type="resolution" value="1.52 A"/>
    <property type="chains" value="A=355-635"/>
</dbReference>
<dbReference type="PDB" id="4YJU">
    <property type="method" value="X-ray"/>
    <property type="resolution" value="1.67 A"/>
    <property type="chains" value="A=355-635"/>
</dbReference>
<dbReference type="PDB" id="4YJV">
    <property type="method" value="X-ray"/>
    <property type="resolution" value="1.65 A"/>
    <property type="chains" value="A=355-635"/>
</dbReference>
<dbReference type="PDB" id="5C26">
    <property type="method" value="X-ray"/>
    <property type="resolution" value="1.95 A"/>
    <property type="chains" value="A=343-635"/>
</dbReference>
<dbReference type="PDB" id="5C27">
    <property type="method" value="X-ray"/>
    <property type="resolution" value="2.15 A"/>
    <property type="chains" value="A=343-635"/>
</dbReference>
<dbReference type="PDB" id="5CXH">
    <property type="method" value="X-ray"/>
    <property type="resolution" value="1.90 A"/>
    <property type="chains" value="A=356-635"/>
</dbReference>
<dbReference type="PDB" id="5CXZ">
    <property type="method" value="X-ray"/>
    <property type="resolution" value="1.70 A"/>
    <property type="chains" value="A=356-635"/>
</dbReference>
<dbReference type="PDB" id="5CY3">
    <property type="method" value="X-ray"/>
    <property type="resolution" value="1.76 A"/>
    <property type="chains" value="A=356-635"/>
</dbReference>
<dbReference type="PDB" id="5GHV">
    <property type="method" value="X-ray"/>
    <property type="resolution" value="2.80 A"/>
    <property type="chains" value="A/B=356-635"/>
</dbReference>
<dbReference type="PDB" id="5LMA">
    <property type="method" value="X-ray"/>
    <property type="resolution" value="1.43 A"/>
    <property type="chains" value="A=360-635"/>
</dbReference>
<dbReference type="PDB" id="5LMB">
    <property type="method" value="X-ray"/>
    <property type="resolution" value="1.95 A"/>
    <property type="chains" value="A/B=360-635"/>
</dbReference>
<dbReference type="PDB" id="5T68">
    <property type="method" value="X-ray"/>
    <property type="resolution" value="2.93 A"/>
    <property type="chains" value="A/B=356-635"/>
</dbReference>
<dbReference type="PDB" id="5TIU">
    <property type="method" value="X-ray"/>
    <property type="resolution" value="1.49 A"/>
    <property type="chains" value="A=356-635"/>
</dbReference>
<dbReference type="PDB" id="5TR6">
    <property type="method" value="X-ray"/>
    <property type="resolution" value="1.93 A"/>
    <property type="chains" value="A=356-635"/>
</dbReference>
<dbReference type="PDB" id="5TT7">
    <property type="method" value="X-ray"/>
    <property type="resolution" value="1.77 A"/>
    <property type="chains" value="A=356-635"/>
</dbReference>
<dbReference type="PDB" id="5Y5T">
    <property type="method" value="X-ray"/>
    <property type="resolution" value="1.80 A"/>
    <property type="chains" value="A=356-635"/>
</dbReference>
<dbReference type="PDB" id="5Y5U">
    <property type="method" value="X-ray"/>
    <property type="resolution" value="2.14 A"/>
    <property type="chains" value="A/B=356-635"/>
</dbReference>
<dbReference type="PDB" id="6HM6">
    <property type="method" value="X-ray"/>
    <property type="resolution" value="2.10 A"/>
    <property type="chains" value="A=360-635"/>
</dbReference>
<dbReference type="PDB" id="6HM7">
    <property type="method" value="X-ray"/>
    <property type="resolution" value="1.64 A"/>
    <property type="chains" value="A=360-635"/>
</dbReference>
<dbReference type="PDB" id="6SSB">
    <property type="method" value="X-ray"/>
    <property type="resolution" value="2.08 A"/>
    <property type="chains" value="A=343-635"/>
</dbReference>
<dbReference type="PDB" id="6VOV">
    <property type="method" value="X-ray"/>
    <property type="resolution" value="1.95 A"/>
    <property type="chains" value="A/B=363-635"/>
</dbReference>
<dbReference type="PDB" id="6ZC0">
    <property type="method" value="X-ray"/>
    <property type="resolution" value="1.97 A"/>
    <property type="chains" value="A=343-635"/>
</dbReference>
<dbReference type="PDB" id="6ZCP">
    <property type="method" value="X-ray"/>
    <property type="resolution" value="2.20 A"/>
    <property type="chains" value="A=343-635"/>
</dbReference>
<dbReference type="PDB" id="6ZCQ">
    <property type="method" value="X-ray"/>
    <property type="resolution" value="2.32 A"/>
    <property type="chains" value="A=343-635"/>
</dbReference>
<dbReference type="PDB" id="6ZCR">
    <property type="method" value="X-ray"/>
    <property type="resolution" value="1.73 A"/>
    <property type="chains" value="A=343-635"/>
</dbReference>
<dbReference type="PDB" id="6ZCS">
    <property type="method" value="X-ray"/>
    <property type="resolution" value="1.47 A"/>
    <property type="chains" value="A=343-635"/>
</dbReference>
<dbReference type="PDB" id="6ZCU">
    <property type="method" value="X-ray"/>
    <property type="resolution" value="1.73 A"/>
    <property type="chains" value="A=343-635"/>
</dbReference>
<dbReference type="PDB" id="6ZCX">
    <property type="method" value="X-ray"/>
    <property type="resolution" value="1.66 A"/>
    <property type="chains" value="A=343-635"/>
</dbReference>
<dbReference type="PDB" id="6ZCY">
    <property type="method" value="X-ray"/>
    <property type="resolution" value="1.81 A"/>
    <property type="chains" value="A=343-635"/>
</dbReference>
<dbReference type="PDB" id="7Q5T">
    <property type="method" value="X-ray"/>
    <property type="resolution" value="2.20 A"/>
    <property type="chains" value="AAA/BBB/CCC/DDD/EEE/FFF=6-269"/>
</dbReference>
<dbReference type="PDB" id="7Q5U">
    <property type="method" value="X-ray"/>
    <property type="resolution" value="2.40 A"/>
    <property type="chains" value="AAA/BBB/CCC/DDD/EEE/FFF=6-269"/>
</dbReference>
<dbReference type="PDB" id="7Q5W">
    <property type="method" value="X-ray"/>
    <property type="resolution" value="2.20 A"/>
    <property type="chains" value="AAA/BBB/CCC/DDD/EEE/FFF=6-269"/>
</dbReference>
<dbReference type="PDB" id="7Q63">
    <property type="method" value="X-ray"/>
    <property type="resolution" value="1.90 A"/>
    <property type="chains" value="AAA/BBB/CCC=6-269"/>
</dbReference>
<dbReference type="PDB" id="7SA7">
    <property type="method" value="X-ray"/>
    <property type="resolution" value="3.20 A"/>
    <property type="chains" value="A/B/C/D/E/F=6-269"/>
</dbReference>
<dbReference type="PDB" id="8BI2">
    <property type="method" value="X-ray"/>
    <property type="resolution" value="1.51 A"/>
    <property type="chains" value="A=343-635"/>
</dbReference>
<dbReference type="PDB" id="8RRQ">
    <property type="method" value="X-ray"/>
    <property type="resolution" value="1.60 A"/>
    <property type="chains" value="A=355-635"/>
</dbReference>
<dbReference type="PDB" id="8RRZ">
    <property type="method" value="X-ray"/>
    <property type="resolution" value="1.75 A"/>
    <property type="chains" value="A=355-635"/>
</dbReference>
<dbReference type="PDB" id="8WYW">
    <property type="method" value="X-ray"/>
    <property type="resolution" value="1.90 A"/>
    <property type="chains" value="A/B=356-635"/>
</dbReference>
<dbReference type="PDB" id="8X5K">
    <property type="method" value="X-ray"/>
    <property type="resolution" value="1.80 A"/>
    <property type="chains" value="A=356-635"/>
</dbReference>
<dbReference type="PDB" id="8XQ0">
    <property type="method" value="X-ray"/>
    <property type="resolution" value="1.95 A"/>
    <property type="chains" value="A/B/C/D=356-635"/>
</dbReference>
<dbReference type="PDB" id="8XQ1">
    <property type="method" value="X-ray"/>
    <property type="resolution" value="1.50 A"/>
    <property type="chains" value="A/B=356-635"/>
</dbReference>
<dbReference type="PDB" id="8XQ2">
    <property type="method" value="X-ray"/>
    <property type="resolution" value="1.80 A"/>
    <property type="chains" value="A/B=356-635"/>
</dbReference>
<dbReference type="PDBsum" id="1A81"/>
<dbReference type="PDBsum" id="1CSY"/>
<dbReference type="PDBsum" id="1CSZ"/>
<dbReference type="PDBsum" id="1XBA"/>
<dbReference type="PDBsum" id="1XBB"/>
<dbReference type="PDBsum" id="1XBC"/>
<dbReference type="PDBsum" id="3BUW"/>
<dbReference type="PDBsum" id="3EMG"/>
<dbReference type="PDBsum" id="3FQE"/>
<dbReference type="PDBsum" id="3FQH"/>
<dbReference type="PDBsum" id="3FQS"/>
<dbReference type="PDBsum" id="3SRV"/>
<dbReference type="PDBsum" id="3TUB"/>
<dbReference type="PDBsum" id="3TUC"/>
<dbReference type="PDBsum" id="3TUD"/>
<dbReference type="PDBsum" id="3VF8"/>
<dbReference type="PDBsum" id="3VF9"/>
<dbReference type="PDBsum" id="4DFL"/>
<dbReference type="PDBsum" id="4DFN"/>
<dbReference type="PDBsum" id="4F4P"/>
<dbReference type="PDBsum" id="4FL1"/>
<dbReference type="PDBsum" id="4FL2"/>
<dbReference type="PDBsum" id="4FL3"/>
<dbReference type="PDBsum" id="4FYN"/>
<dbReference type="PDBsum" id="4FYO"/>
<dbReference type="PDBsum" id="4FZ6"/>
<dbReference type="PDBsum" id="4FZ7"/>
<dbReference type="PDBsum" id="4GFG"/>
<dbReference type="PDBsum" id="4I0R"/>
<dbReference type="PDBsum" id="4I0S"/>
<dbReference type="PDBsum" id="4I0T"/>
<dbReference type="PDBsum" id="4PUZ"/>
<dbReference type="PDBsum" id="4PV0"/>
<dbReference type="PDBsum" id="4PX6"/>
<dbReference type="PDBsum" id="4RSS"/>
<dbReference type="PDBsum" id="4RX7"/>
<dbReference type="PDBsum" id="4RX8"/>
<dbReference type="PDBsum" id="4RX9"/>
<dbReference type="PDBsum" id="4WNM"/>
<dbReference type="PDBsum" id="4XG2"/>
<dbReference type="PDBsum" id="4XG3"/>
<dbReference type="PDBsum" id="4XG4"/>
<dbReference type="PDBsum" id="4XG6"/>
<dbReference type="PDBsum" id="4XG7"/>
<dbReference type="PDBsum" id="4XG8"/>
<dbReference type="PDBsum" id="4XG9"/>
<dbReference type="PDBsum" id="4YJO"/>
<dbReference type="PDBsum" id="4YJP"/>
<dbReference type="PDBsum" id="4YJQ"/>
<dbReference type="PDBsum" id="4YJR"/>
<dbReference type="PDBsum" id="4YJS"/>
<dbReference type="PDBsum" id="4YJT"/>
<dbReference type="PDBsum" id="4YJU"/>
<dbReference type="PDBsum" id="4YJV"/>
<dbReference type="PDBsum" id="5C26"/>
<dbReference type="PDBsum" id="5C27"/>
<dbReference type="PDBsum" id="5CXH"/>
<dbReference type="PDBsum" id="5CXZ"/>
<dbReference type="PDBsum" id="5CY3"/>
<dbReference type="PDBsum" id="5GHV"/>
<dbReference type="PDBsum" id="5LMA"/>
<dbReference type="PDBsum" id="5LMB"/>
<dbReference type="PDBsum" id="5T68"/>
<dbReference type="PDBsum" id="5TIU"/>
<dbReference type="PDBsum" id="5TR6"/>
<dbReference type="PDBsum" id="5TT7"/>
<dbReference type="PDBsum" id="5Y5T"/>
<dbReference type="PDBsum" id="5Y5U"/>
<dbReference type="PDBsum" id="6HM6"/>
<dbReference type="PDBsum" id="6HM7"/>
<dbReference type="PDBsum" id="6SSB"/>
<dbReference type="PDBsum" id="6VOV"/>
<dbReference type="PDBsum" id="6ZC0"/>
<dbReference type="PDBsum" id="6ZCP"/>
<dbReference type="PDBsum" id="6ZCQ"/>
<dbReference type="PDBsum" id="6ZCR"/>
<dbReference type="PDBsum" id="6ZCS"/>
<dbReference type="PDBsum" id="6ZCU"/>
<dbReference type="PDBsum" id="6ZCX"/>
<dbReference type="PDBsum" id="6ZCY"/>
<dbReference type="PDBsum" id="7Q5T"/>
<dbReference type="PDBsum" id="7Q5U"/>
<dbReference type="PDBsum" id="7Q5W"/>
<dbReference type="PDBsum" id="7Q63"/>
<dbReference type="PDBsum" id="7SA7"/>
<dbReference type="PDBsum" id="8BI2"/>
<dbReference type="PDBsum" id="8RRQ"/>
<dbReference type="PDBsum" id="8RRZ"/>
<dbReference type="PDBsum" id="8WYW"/>
<dbReference type="PDBsum" id="8X5K"/>
<dbReference type="PDBsum" id="8XQ0"/>
<dbReference type="PDBsum" id="8XQ1"/>
<dbReference type="PDBsum" id="8XQ2"/>
<dbReference type="SASBDB" id="P43405"/>
<dbReference type="SMR" id="P43405"/>
<dbReference type="BioGRID" id="112717">
    <property type="interactions" value="227"/>
</dbReference>
<dbReference type="CORUM" id="P43405"/>
<dbReference type="DIP" id="DIP-253N"/>
<dbReference type="ELM" id="P43405"/>
<dbReference type="FunCoup" id="P43405">
    <property type="interactions" value="977"/>
</dbReference>
<dbReference type="IntAct" id="P43405">
    <property type="interactions" value="155"/>
</dbReference>
<dbReference type="MINT" id="P43405"/>
<dbReference type="STRING" id="9606.ENSP00000364898"/>
<dbReference type="BindingDB" id="P43405"/>
<dbReference type="ChEMBL" id="CHEMBL2599"/>
<dbReference type="DrugBank" id="DB07194">
    <property type="generic name" value="2-{2-[(3,5-dimethylphenyl)amino]pyrimidin-4-yl}-N-[(1S)-2-hydroxy-1-methylethyl]-4-methyl-1,3-thiazole-5-carboxamide"/>
</dbReference>
<dbReference type="DrugBank" id="DB08361">
    <property type="generic name" value="2-{[(1R,2S)-2-aminocyclohexyl]amino}-4-[(3-methylphenyl)amino]pyrimidine-5-carboxamide"/>
</dbReference>
<dbReference type="DrugBank" id="DB15499">
    <property type="generic name" value="Cerdulatinib"/>
</dbReference>
<dbReference type="DrugBank" id="DB18725">
    <property type="generic name" value="Cevidoplenib"/>
</dbReference>
<dbReference type="DrugBank" id="DB08846">
    <property type="generic name" value="Ellagic acid"/>
</dbReference>
<dbReference type="DrugBank" id="DB12121">
    <property type="generic name" value="Entospletinib"/>
</dbReference>
<dbReference type="DrugBank" id="DB12010">
    <property type="generic name" value="Fostamatinib"/>
</dbReference>
<dbReference type="DrugBank" id="DB15670">
    <property type="generic name" value="Gusacitinib"/>
</dbReference>
<dbReference type="DrugBank" id="DB14770">
    <property type="generic name" value="Lanraplenib"/>
</dbReference>
<dbReference type="DrugBank" id="DB16849">
    <property type="generic name" value="Mivavotinib"/>
</dbReference>
<dbReference type="DrugBank" id="DB06834">
    <property type="generic name" value="N-(2-hydroxy-1,1-dimethylethyl)-1-methyl-3-(1H-pyrrolo[2,3-b]pyridin-2-yl)-1H-indole-5-carboxamide"/>
</dbReference>
<dbReference type="DrugBank" id="DB06252">
    <property type="generic name" value="R112"/>
</dbReference>
<dbReference type="DrugBank" id="DB06316">
    <property type="generic name" value="R343"/>
</dbReference>
<dbReference type="DrugBank" id="DB02010">
    <property type="generic name" value="Staurosporine"/>
</dbReference>
<dbReference type="DrugBank" id="DB07159">
    <property type="generic name" value="Tamatinib"/>
</dbReference>
<dbReference type="DrugCentral" id="P43405"/>
<dbReference type="GuidetoPHARMACOLOGY" id="2230"/>
<dbReference type="MoonDB" id="P43405">
    <property type="type" value="Predicted"/>
</dbReference>
<dbReference type="GlyGen" id="P43405">
    <property type="glycosylation" value="1 site, 1 O-linked glycan (1 site)"/>
</dbReference>
<dbReference type="iPTMnet" id="P43405"/>
<dbReference type="PhosphoSitePlus" id="P43405"/>
<dbReference type="BioMuta" id="SYK"/>
<dbReference type="DMDM" id="1174527"/>
<dbReference type="CPTAC" id="CPTAC-1173"/>
<dbReference type="CPTAC" id="CPTAC-1174"/>
<dbReference type="CPTAC" id="CPTAC-3142"/>
<dbReference type="CPTAC" id="CPTAC-3143"/>
<dbReference type="jPOST" id="P43405"/>
<dbReference type="MassIVE" id="P43405"/>
<dbReference type="PaxDb" id="9606-ENSP00000364907"/>
<dbReference type="PeptideAtlas" id="P43405"/>
<dbReference type="ProteomicsDB" id="55634">
    <molecule id="P43405-1"/>
</dbReference>
<dbReference type="ProteomicsDB" id="55635">
    <molecule id="P43405-2"/>
</dbReference>
<dbReference type="Pumba" id="P43405"/>
<dbReference type="Antibodypedia" id="733">
    <property type="antibodies" value="1565 antibodies from 50 providers"/>
</dbReference>
<dbReference type="DNASU" id="6850"/>
<dbReference type="YCharOS" id="P43405">
    <property type="antibodies" value="Tested 18 antibodies from 9 manufacturers"/>
</dbReference>
<dbReference type="Ensembl" id="ENST00000375746.1">
    <molecule id="P43405-1"/>
    <property type="protein sequence ID" value="ENSP00000364898.1"/>
    <property type="gene ID" value="ENSG00000165025.15"/>
</dbReference>
<dbReference type="Ensembl" id="ENST00000375747.5">
    <molecule id="P43405-2"/>
    <property type="protein sequence ID" value="ENSP00000364899.1"/>
    <property type="gene ID" value="ENSG00000165025.15"/>
</dbReference>
<dbReference type="Ensembl" id="ENST00000375751.8">
    <molecule id="P43405-2"/>
    <property type="protein sequence ID" value="ENSP00000364904.4"/>
    <property type="gene ID" value="ENSG00000165025.15"/>
</dbReference>
<dbReference type="Ensembl" id="ENST00000375754.9">
    <molecule id="P43405-1"/>
    <property type="protein sequence ID" value="ENSP00000364907.4"/>
    <property type="gene ID" value="ENSG00000165025.15"/>
</dbReference>
<dbReference type="GeneID" id="6850"/>
<dbReference type="KEGG" id="hsa:6850"/>
<dbReference type="MANE-Select" id="ENST00000375754.9">
    <property type="protein sequence ID" value="ENSP00000364907.4"/>
    <property type="RefSeq nucleotide sequence ID" value="NM_003177.7"/>
    <property type="RefSeq protein sequence ID" value="NP_003168.2"/>
</dbReference>
<dbReference type="UCSC" id="uc004aqz.4">
    <molecule id="P43405-1"/>
    <property type="organism name" value="human"/>
</dbReference>
<dbReference type="AGR" id="HGNC:11491"/>
<dbReference type="CTD" id="6850"/>
<dbReference type="DisGeNET" id="6850"/>
<dbReference type="GeneCards" id="SYK"/>
<dbReference type="HGNC" id="HGNC:11491">
    <property type="gene designation" value="SYK"/>
</dbReference>
<dbReference type="HPA" id="ENSG00000165025">
    <property type="expression patterns" value="Tissue enhanced (lymphoid tissue, parathyroid gland)"/>
</dbReference>
<dbReference type="MalaCards" id="SYK"/>
<dbReference type="MIM" id="600085">
    <property type="type" value="gene"/>
</dbReference>
<dbReference type="MIM" id="619381">
    <property type="type" value="phenotype"/>
</dbReference>
<dbReference type="neXtProt" id="NX_P43405"/>
<dbReference type="OpenTargets" id="ENSG00000165025"/>
<dbReference type="PharmGKB" id="PA36273"/>
<dbReference type="VEuPathDB" id="HostDB:ENSG00000165025"/>
<dbReference type="eggNOG" id="ENOG502QT06">
    <property type="taxonomic scope" value="Eukaryota"/>
</dbReference>
<dbReference type="GeneTree" id="ENSGT00940000159053"/>
<dbReference type="HOGENOM" id="CLU_000288_7_2_1"/>
<dbReference type="InParanoid" id="P43405"/>
<dbReference type="OMA" id="TIVGDHK"/>
<dbReference type="OrthoDB" id="535945at2759"/>
<dbReference type="PAN-GO" id="P43405">
    <property type="GO annotations" value="15 GO annotations based on evolutionary models"/>
</dbReference>
<dbReference type="PhylomeDB" id="P43405"/>
<dbReference type="TreeFam" id="TF351629"/>
<dbReference type="BRENDA" id="2.7.10.2">
    <property type="organism ID" value="2681"/>
</dbReference>
<dbReference type="BRENDA" id="2.7.12.1">
    <property type="organism ID" value="2681"/>
</dbReference>
<dbReference type="PathwayCommons" id="P43405"/>
<dbReference type="Reactome" id="R-HSA-114604">
    <property type="pathway name" value="GPVI-mediated activation cascade"/>
</dbReference>
<dbReference type="Reactome" id="R-HSA-2029481">
    <property type="pathway name" value="FCGR activation"/>
</dbReference>
<dbReference type="Reactome" id="R-HSA-2029482">
    <property type="pathway name" value="Regulation of actin dynamics for phagocytic cup formation"/>
</dbReference>
<dbReference type="Reactome" id="R-HSA-2029485">
    <property type="pathway name" value="Role of phospholipids in phagocytosis"/>
</dbReference>
<dbReference type="Reactome" id="R-HSA-2424491">
    <property type="pathway name" value="DAP12 signaling"/>
</dbReference>
<dbReference type="Reactome" id="R-HSA-2454202">
    <property type="pathway name" value="Fc epsilon receptor (FCERI) signaling"/>
</dbReference>
<dbReference type="Reactome" id="R-HSA-2730905">
    <property type="pathway name" value="Role of LAT2/NTAL/LAB on calcium mobilization"/>
</dbReference>
<dbReference type="Reactome" id="R-HSA-2871796">
    <property type="pathway name" value="FCERI mediated MAPK activation"/>
</dbReference>
<dbReference type="Reactome" id="R-HSA-2871809">
    <property type="pathway name" value="FCERI mediated Ca+2 mobilization"/>
</dbReference>
<dbReference type="Reactome" id="R-HSA-354192">
    <property type="pathway name" value="Integrin signaling"/>
</dbReference>
<dbReference type="Reactome" id="R-HSA-5607764">
    <property type="pathway name" value="CLEC7A (Dectin-1) signaling"/>
</dbReference>
<dbReference type="Reactome" id="R-HSA-5621480">
    <property type="pathway name" value="Dectin-2 family"/>
</dbReference>
<dbReference type="Reactome" id="R-HSA-9020558">
    <property type="pathway name" value="Interleukin-2 signaling"/>
</dbReference>
<dbReference type="Reactome" id="R-HSA-912631">
    <property type="pathway name" value="Regulation of signaling by CBL"/>
</dbReference>
<dbReference type="Reactome" id="R-HSA-9664323">
    <property type="pathway name" value="FCGR3A-mediated IL10 synthesis"/>
</dbReference>
<dbReference type="Reactome" id="R-HSA-9664422">
    <property type="pathway name" value="FCGR3A-mediated phagocytosis"/>
</dbReference>
<dbReference type="Reactome" id="R-HSA-9674555">
    <property type="pathway name" value="Signaling by CSF3 (G-CSF)"/>
</dbReference>
<dbReference type="Reactome" id="R-HSA-9679191">
    <property type="pathway name" value="Potential therapeutics for SARS"/>
</dbReference>
<dbReference type="Reactome" id="R-HSA-9705462">
    <property type="pathway name" value="Inactivation of CSF3 (G-CSF) signaling"/>
</dbReference>
<dbReference type="Reactome" id="R-HSA-9706374">
    <property type="pathway name" value="FLT3 signaling through SRC family kinases"/>
</dbReference>
<dbReference type="Reactome" id="R-HSA-983695">
    <property type="pathway name" value="Antigen activates B Cell Receptor (BCR) leading to generation of second messengers"/>
</dbReference>
<dbReference type="SignaLink" id="P43405"/>
<dbReference type="SIGNOR" id="P43405"/>
<dbReference type="BioGRID-ORCS" id="6850">
    <property type="hits" value="23 hits in 1200 CRISPR screens"/>
</dbReference>
<dbReference type="ChiTaRS" id="SYK">
    <property type="organism name" value="human"/>
</dbReference>
<dbReference type="EvolutionaryTrace" id="P43405"/>
<dbReference type="GeneWiki" id="Syk"/>
<dbReference type="GenomeRNAi" id="6850"/>
<dbReference type="Pharos" id="P43405">
    <property type="development level" value="Tclin"/>
</dbReference>
<dbReference type="PRO" id="PR:P43405"/>
<dbReference type="Proteomes" id="UP000005640">
    <property type="component" value="Chromosome 9"/>
</dbReference>
<dbReference type="RNAct" id="P43405">
    <property type="molecule type" value="protein"/>
</dbReference>
<dbReference type="Bgee" id="ENSG00000165025">
    <property type="expression patterns" value="Expressed in monocyte and 166 other cell types or tissues"/>
</dbReference>
<dbReference type="ExpressionAtlas" id="P43405">
    <property type="expression patterns" value="baseline and differential"/>
</dbReference>
<dbReference type="GO" id="GO:0019815">
    <property type="term" value="C:B cell receptor complex"/>
    <property type="evidence" value="ECO:0007669"/>
    <property type="project" value="Ensembl"/>
</dbReference>
<dbReference type="GO" id="GO:0005737">
    <property type="term" value="C:cytoplasm"/>
    <property type="evidence" value="ECO:0000314"/>
    <property type="project" value="MGI"/>
</dbReference>
<dbReference type="GO" id="GO:0005829">
    <property type="term" value="C:cytosol"/>
    <property type="evidence" value="ECO:0000304"/>
    <property type="project" value="Reactome"/>
</dbReference>
<dbReference type="GO" id="GO:0032009">
    <property type="term" value="C:early phagosome"/>
    <property type="evidence" value="ECO:0000250"/>
    <property type="project" value="UniProtKB"/>
</dbReference>
<dbReference type="GO" id="GO:0005634">
    <property type="term" value="C:nucleus"/>
    <property type="evidence" value="ECO:0000314"/>
    <property type="project" value="MGI"/>
</dbReference>
<dbReference type="GO" id="GO:0005886">
    <property type="term" value="C:plasma membrane"/>
    <property type="evidence" value="ECO:0000318"/>
    <property type="project" value="GO_Central"/>
</dbReference>
<dbReference type="GO" id="GO:0032991">
    <property type="term" value="C:protein-containing complex"/>
    <property type="evidence" value="ECO:0000314"/>
    <property type="project" value="MGI"/>
</dbReference>
<dbReference type="GO" id="GO:0042101">
    <property type="term" value="C:T cell receptor complex"/>
    <property type="evidence" value="ECO:0000314"/>
    <property type="project" value="MGI"/>
</dbReference>
<dbReference type="GO" id="GO:0005524">
    <property type="term" value="F:ATP binding"/>
    <property type="evidence" value="ECO:0007669"/>
    <property type="project" value="UniProtKB-KW"/>
</dbReference>
<dbReference type="GO" id="GO:0005178">
    <property type="term" value="F:integrin binding"/>
    <property type="evidence" value="ECO:0000353"/>
    <property type="project" value="UniProtKB"/>
</dbReference>
<dbReference type="GO" id="GO:0016170">
    <property type="term" value="F:interleukin-15 receptor binding"/>
    <property type="evidence" value="ECO:0000353"/>
    <property type="project" value="UniProtKB"/>
</dbReference>
<dbReference type="GO" id="GO:0016301">
    <property type="term" value="F:kinase activity"/>
    <property type="evidence" value="ECO:0000314"/>
    <property type="project" value="UniProt"/>
</dbReference>
<dbReference type="GO" id="GO:0004715">
    <property type="term" value="F:non-membrane spanning protein tyrosine kinase activity"/>
    <property type="evidence" value="ECO:0000314"/>
    <property type="project" value="UniProtKB"/>
</dbReference>
<dbReference type="GO" id="GO:0019902">
    <property type="term" value="F:phosphatase binding"/>
    <property type="evidence" value="ECO:0007669"/>
    <property type="project" value="Ensembl"/>
</dbReference>
<dbReference type="GO" id="GO:0043274">
    <property type="term" value="F:phospholipase binding"/>
    <property type="evidence" value="ECO:0000353"/>
    <property type="project" value="ARUK-UCL"/>
</dbReference>
<dbReference type="GO" id="GO:0001784">
    <property type="term" value="F:phosphotyrosine residue binding"/>
    <property type="evidence" value="ECO:0000353"/>
    <property type="project" value="CAFA"/>
</dbReference>
<dbReference type="GO" id="GO:0004672">
    <property type="term" value="F:protein kinase activity"/>
    <property type="evidence" value="ECO:0000314"/>
    <property type="project" value="CACAO"/>
</dbReference>
<dbReference type="GO" id="GO:0019901">
    <property type="term" value="F:protein kinase binding"/>
    <property type="evidence" value="ECO:0007669"/>
    <property type="project" value="Ensembl"/>
</dbReference>
<dbReference type="GO" id="GO:0004674">
    <property type="term" value="F:protein serine/threonine kinase activity"/>
    <property type="evidence" value="ECO:0000314"/>
    <property type="project" value="MGI"/>
</dbReference>
<dbReference type="GO" id="GO:0004713">
    <property type="term" value="F:protein tyrosine kinase activity"/>
    <property type="evidence" value="ECO:0000314"/>
    <property type="project" value="UniProtKB"/>
</dbReference>
<dbReference type="GO" id="GO:0097110">
    <property type="term" value="F:scaffold protein binding"/>
    <property type="evidence" value="ECO:0000353"/>
    <property type="project" value="ARUK-UCL"/>
</dbReference>
<dbReference type="GO" id="GO:0042169">
    <property type="term" value="F:SH2 domain binding"/>
    <property type="evidence" value="ECO:0007669"/>
    <property type="project" value="Ensembl"/>
</dbReference>
<dbReference type="GO" id="GO:0005102">
    <property type="term" value="F:signaling receptor binding"/>
    <property type="evidence" value="ECO:0000353"/>
    <property type="project" value="ARUK-UCL"/>
</dbReference>
<dbReference type="GO" id="GO:0035325">
    <property type="term" value="F:Toll-like receptor binding"/>
    <property type="evidence" value="ECO:0007669"/>
    <property type="project" value="Ensembl"/>
</dbReference>
<dbReference type="GO" id="GO:0002250">
    <property type="term" value="P:adaptive immune response"/>
    <property type="evidence" value="ECO:0000250"/>
    <property type="project" value="UniProtKB"/>
</dbReference>
<dbReference type="GO" id="GO:0097242">
    <property type="term" value="P:amyloid-beta clearance"/>
    <property type="evidence" value="ECO:0000314"/>
    <property type="project" value="UniProt"/>
</dbReference>
<dbReference type="GO" id="GO:0001525">
    <property type="term" value="P:angiogenesis"/>
    <property type="evidence" value="ECO:0007669"/>
    <property type="project" value="UniProtKB-KW"/>
</dbReference>
<dbReference type="GO" id="GO:0009887">
    <property type="term" value="P:animal organ morphogenesis"/>
    <property type="evidence" value="ECO:0000304"/>
    <property type="project" value="ProtInc"/>
</dbReference>
<dbReference type="GO" id="GO:0097190">
    <property type="term" value="P:apoptotic signaling pathway"/>
    <property type="evidence" value="ECO:0000315"/>
    <property type="project" value="ARUK-UCL"/>
</dbReference>
<dbReference type="GO" id="GO:0030183">
    <property type="term" value="P:B cell differentiation"/>
    <property type="evidence" value="ECO:0007669"/>
    <property type="project" value="Ensembl"/>
</dbReference>
<dbReference type="GO" id="GO:0050853">
    <property type="term" value="P:B cell receptor signaling pathway"/>
    <property type="evidence" value="ECO:0000315"/>
    <property type="project" value="ARUK-UCL"/>
</dbReference>
<dbReference type="GO" id="GO:0043366">
    <property type="term" value="P:beta selection"/>
    <property type="evidence" value="ECO:0007669"/>
    <property type="project" value="Ensembl"/>
</dbReference>
<dbReference type="GO" id="GO:0048514">
    <property type="term" value="P:blood vessel morphogenesis"/>
    <property type="evidence" value="ECO:0000250"/>
    <property type="project" value="UniProtKB"/>
</dbReference>
<dbReference type="GO" id="GO:0019722">
    <property type="term" value="P:calcium-mediated signaling"/>
    <property type="evidence" value="ECO:0007669"/>
    <property type="project" value="Ensembl"/>
</dbReference>
<dbReference type="GO" id="GO:0001775">
    <property type="term" value="P:cell activation"/>
    <property type="evidence" value="ECO:0000250"/>
    <property type="project" value="ARUK-UCL"/>
</dbReference>
<dbReference type="GO" id="GO:0002752">
    <property type="term" value="P:cell surface pattern recognition receptor signaling pathway"/>
    <property type="evidence" value="ECO:0000315"/>
    <property type="project" value="ARUK-UCL"/>
</dbReference>
<dbReference type="GO" id="GO:1904646">
    <property type="term" value="P:cellular response to amyloid-beta"/>
    <property type="evidence" value="ECO:0000314"/>
    <property type="project" value="UniProt"/>
</dbReference>
<dbReference type="GO" id="GO:1990858">
    <property type="term" value="P:cellular response to lectin"/>
    <property type="evidence" value="ECO:0000250"/>
    <property type="project" value="ARUK-UCL"/>
</dbReference>
<dbReference type="GO" id="GO:0071396">
    <property type="term" value="P:cellular response to lipid"/>
    <property type="evidence" value="ECO:0000315"/>
    <property type="project" value="ARUK-UCL"/>
</dbReference>
<dbReference type="GO" id="GO:0071404">
    <property type="term" value="P:cellular response to low-density lipoprotein particle stimulus"/>
    <property type="evidence" value="ECO:0000250"/>
    <property type="project" value="UniProtKB"/>
</dbReference>
<dbReference type="GO" id="GO:0071226">
    <property type="term" value="P:cellular response to molecule of fungal origin"/>
    <property type="evidence" value="ECO:0000250"/>
    <property type="project" value="UniProtKB"/>
</dbReference>
<dbReference type="GO" id="GO:0038063">
    <property type="term" value="P:collagen-activated tyrosine kinase receptor signaling pathway"/>
    <property type="evidence" value="ECO:0007669"/>
    <property type="project" value="Ensembl"/>
</dbReference>
<dbReference type="GO" id="GO:0042742">
    <property type="term" value="P:defense response to bacterium"/>
    <property type="evidence" value="ECO:0000250"/>
    <property type="project" value="UniProtKB"/>
</dbReference>
<dbReference type="GO" id="GO:0038095">
    <property type="term" value="P:Fc-epsilon receptor signaling pathway"/>
    <property type="evidence" value="ECO:0000304"/>
    <property type="project" value="Reactome"/>
</dbReference>
<dbReference type="GO" id="GO:0038096">
    <property type="term" value="P:Fc-gamma receptor signaling pathway involved in phagocytosis"/>
    <property type="evidence" value="ECO:0000304"/>
    <property type="project" value="Reactome"/>
</dbReference>
<dbReference type="GO" id="GO:0042492">
    <property type="term" value="P:gamma-delta T cell differentiation"/>
    <property type="evidence" value="ECO:0007669"/>
    <property type="project" value="Ensembl"/>
</dbReference>
<dbReference type="GO" id="GO:0045087">
    <property type="term" value="P:innate immune response"/>
    <property type="evidence" value="ECO:0000250"/>
    <property type="project" value="UniProtKB"/>
</dbReference>
<dbReference type="GO" id="GO:0007229">
    <property type="term" value="P:integrin-mediated signaling pathway"/>
    <property type="evidence" value="ECO:0000250"/>
    <property type="project" value="UniProtKB"/>
</dbReference>
<dbReference type="GO" id="GO:0038156">
    <property type="term" value="P:interleukin-3-mediated signaling pathway"/>
    <property type="evidence" value="ECO:0000250"/>
    <property type="project" value="UniProtKB"/>
</dbReference>
<dbReference type="GO" id="GO:0035556">
    <property type="term" value="P:intracellular signal transduction"/>
    <property type="evidence" value="ECO:0000314"/>
    <property type="project" value="ARUK-UCL"/>
</dbReference>
<dbReference type="GO" id="GO:0002366">
    <property type="term" value="P:leukocyte activation involved in immune response"/>
    <property type="evidence" value="ECO:0000250"/>
    <property type="project" value="UniProtKB"/>
</dbReference>
<dbReference type="GO" id="GO:0007159">
    <property type="term" value="P:leukocyte cell-cell adhesion"/>
    <property type="evidence" value="ECO:0000314"/>
    <property type="project" value="UniProtKB"/>
</dbReference>
<dbReference type="GO" id="GO:0019370">
    <property type="term" value="P:leukotriene biosynthetic process"/>
    <property type="evidence" value="ECO:0007669"/>
    <property type="project" value="Ensembl"/>
</dbReference>
<dbReference type="GO" id="GO:0001945">
    <property type="term" value="P:lymph vessel development"/>
    <property type="evidence" value="ECO:0000250"/>
    <property type="project" value="UniProtKB"/>
</dbReference>
<dbReference type="GO" id="GO:0002281">
    <property type="term" value="P:macrophage activation involved in immune response"/>
    <property type="evidence" value="ECO:0000250"/>
    <property type="project" value="UniProtKB"/>
</dbReference>
<dbReference type="GO" id="GO:0043303">
    <property type="term" value="P:mast cell degranulation"/>
    <property type="evidence" value="ECO:0007669"/>
    <property type="project" value="Ensembl"/>
</dbReference>
<dbReference type="GO" id="GO:0002862">
    <property type="term" value="P:negative regulation of inflammatory response to antigenic stimulus"/>
    <property type="evidence" value="ECO:0000304"/>
    <property type="project" value="Reactome"/>
</dbReference>
<dbReference type="GO" id="GO:0002283">
    <property type="term" value="P:neutrophil activation involved in immune response"/>
    <property type="evidence" value="ECO:0000250"/>
    <property type="project" value="UniProtKB"/>
</dbReference>
<dbReference type="GO" id="GO:0030593">
    <property type="term" value="P:neutrophil chemotaxis"/>
    <property type="evidence" value="ECO:0000314"/>
    <property type="project" value="UniProtKB"/>
</dbReference>
<dbReference type="GO" id="GO:0018108">
    <property type="term" value="P:peptidyl-tyrosine phosphorylation"/>
    <property type="evidence" value="ECO:0000250"/>
    <property type="project" value="UniProtKB"/>
</dbReference>
<dbReference type="GO" id="GO:0030168">
    <property type="term" value="P:platelet activation"/>
    <property type="evidence" value="ECO:0000304"/>
    <property type="project" value="Reactome"/>
</dbReference>
<dbReference type="GO" id="GO:0046638">
    <property type="term" value="P:positive regulation of alpha-beta T cell differentiation"/>
    <property type="evidence" value="ECO:0007669"/>
    <property type="project" value="Ensembl"/>
</dbReference>
<dbReference type="GO" id="GO:0046641">
    <property type="term" value="P:positive regulation of alpha-beta T cell proliferation"/>
    <property type="evidence" value="ECO:0007669"/>
    <property type="project" value="Ensembl"/>
</dbReference>
<dbReference type="GO" id="GO:0045579">
    <property type="term" value="P:positive regulation of B cell differentiation"/>
    <property type="evidence" value="ECO:0000315"/>
    <property type="project" value="CACAO"/>
</dbReference>
<dbReference type="GO" id="GO:0045780">
    <property type="term" value="P:positive regulation of bone resorption"/>
    <property type="evidence" value="ECO:0000250"/>
    <property type="project" value="UniProtKB"/>
</dbReference>
<dbReference type="GO" id="GO:0050850">
    <property type="term" value="P:positive regulation of calcium-mediated signaling"/>
    <property type="evidence" value="ECO:0007669"/>
    <property type="project" value="Ensembl"/>
</dbReference>
<dbReference type="GO" id="GO:0033630">
    <property type="term" value="P:positive regulation of cell adhesion mediated by integrin"/>
    <property type="evidence" value="ECO:0000250"/>
    <property type="project" value="UniProtKB"/>
</dbReference>
<dbReference type="GO" id="GO:0120162">
    <property type="term" value="P:positive regulation of cold-induced thermogenesis"/>
    <property type="evidence" value="ECO:0000250"/>
    <property type="project" value="YuBioLab"/>
</dbReference>
<dbReference type="GO" id="GO:0045588">
    <property type="term" value="P:positive regulation of gamma-delta T cell differentiation"/>
    <property type="evidence" value="ECO:0007669"/>
    <property type="project" value="Ensembl"/>
</dbReference>
<dbReference type="GO" id="GO:0032725">
    <property type="term" value="P:positive regulation of granulocyte macrophage colony-stimulating factor production"/>
    <property type="evidence" value="ECO:0007669"/>
    <property type="project" value="Ensembl"/>
</dbReference>
<dbReference type="GO" id="GO:0032733">
    <property type="term" value="P:positive regulation of interleukin-10 production"/>
    <property type="evidence" value="ECO:0000315"/>
    <property type="project" value="ARUK-UCL"/>
</dbReference>
<dbReference type="GO" id="GO:0032735">
    <property type="term" value="P:positive regulation of interleukin-12 production"/>
    <property type="evidence" value="ECO:0000315"/>
    <property type="project" value="ARUK-UCL"/>
</dbReference>
<dbReference type="GO" id="GO:0032752">
    <property type="term" value="P:positive regulation of interleukin-3 production"/>
    <property type="evidence" value="ECO:0007669"/>
    <property type="project" value="Ensembl"/>
</dbReference>
<dbReference type="GO" id="GO:0032753">
    <property type="term" value="P:positive regulation of interleukin-4 production"/>
    <property type="evidence" value="ECO:0000250"/>
    <property type="project" value="UniProtKB"/>
</dbReference>
<dbReference type="GO" id="GO:0032755">
    <property type="term" value="P:positive regulation of interleukin-6 production"/>
    <property type="evidence" value="ECO:0000315"/>
    <property type="project" value="ARUK-UCL"/>
</dbReference>
<dbReference type="GO" id="GO:0032757">
    <property type="term" value="P:positive regulation of interleukin-8 production"/>
    <property type="evidence" value="ECO:0000315"/>
    <property type="project" value="ARUK-UCL"/>
</dbReference>
<dbReference type="GO" id="GO:0043410">
    <property type="term" value="P:positive regulation of MAPK cascade"/>
    <property type="evidence" value="ECO:0007669"/>
    <property type="project" value="Ensembl"/>
</dbReference>
<dbReference type="GO" id="GO:0032765">
    <property type="term" value="P:positive regulation of mast cell cytokine production"/>
    <property type="evidence" value="ECO:0007669"/>
    <property type="project" value="Ensembl"/>
</dbReference>
<dbReference type="GO" id="GO:0043306">
    <property type="term" value="P:positive regulation of mast cell degranulation"/>
    <property type="evidence" value="ECO:0007669"/>
    <property type="project" value="Ensembl"/>
</dbReference>
<dbReference type="GO" id="GO:0071639">
    <property type="term" value="P:positive regulation of monocyte chemotactic protein-1 production"/>
    <property type="evidence" value="ECO:0000315"/>
    <property type="project" value="ARUK-UCL"/>
</dbReference>
<dbReference type="GO" id="GO:0031334">
    <property type="term" value="P:positive regulation of protein-containing complex assembly"/>
    <property type="evidence" value="ECO:0000315"/>
    <property type="project" value="ARUK-UCL"/>
</dbReference>
<dbReference type="GO" id="GO:0002092">
    <property type="term" value="P:positive regulation of receptor internalization"/>
    <property type="evidence" value="ECO:0007669"/>
    <property type="project" value="Ensembl"/>
</dbReference>
<dbReference type="GO" id="GO:0032930">
    <property type="term" value="P:positive regulation of superoxide anion generation"/>
    <property type="evidence" value="ECO:0000315"/>
    <property type="project" value="ARUK-UCL"/>
</dbReference>
<dbReference type="GO" id="GO:1904263">
    <property type="term" value="P:positive regulation of TORC1 signaling"/>
    <property type="evidence" value="ECO:0000314"/>
    <property type="project" value="UniProt"/>
</dbReference>
<dbReference type="GO" id="GO:0032760">
    <property type="term" value="P:positive regulation of tumor necrosis factor production"/>
    <property type="evidence" value="ECO:0000315"/>
    <property type="project" value="ARUK-UCL"/>
</dbReference>
<dbReference type="GO" id="GO:0032481">
    <property type="term" value="P:positive regulation of type I interferon production"/>
    <property type="evidence" value="ECO:0007669"/>
    <property type="project" value="Ensembl"/>
</dbReference>
<dbReference type="GO" id="GO:0006606">
    <property type="term" value="P:protein import into nucleus"/>
    <property type="evidence" value="ECO:0000315"/>
    <property type="project" value="MGI"/>
</dbReference>
<dbReference type="GO" id="GO:0006468">
    <property type="term" value="P:protein phosphorylation"/>
    <property type="evidence" value="ECO:0000314"/>
    <property type="project" value="CACAO"/>
</dbReference>
<dbReference type="GO" id="GO:0031623">
    <property type="term" value="P:receptor internalization"/>
    <property type="evidence" value="ECO:0000250"/>
    <property type="project" value="UniProtKB"/>
</dbReference>
<dbReference type="GO" id="GO:0090237">
    <property type="term" value="P:regulation of arachidonate secretion"/>
    <property type="evidence" value="ECO:0000250"/>
    <property type="project" value="UniProtKB"/>
</dbReference>
<dbReference type="GO" id="GO:0051090">
    <property type="term" value="P:regulation of DNA-binding transcription factor activity"/>
    <property type="evidence" value="ECO:0000315"/>
    <property type="project" value="MGI"/>
</dbReference>
<dbReference type="GO" id="GO:0070372">
    <property type="term" value="P:regulation of ERK1 and ERK2 cascade"/>
    <property type="evidence" value="ECO:0000250"/>
    <property type="project" value="UniProtKB"/>
</dbReference>
<dbReference type="GO" id="GO:0043313">
    <property type="term" value="P:regulation of neutrophil degranulation"/>
    <property type="evidence" value="ECO:0000250"/>
    <property type="project" value="UniProtKB"/>
</dbReference>
<dbReference type="GO" id="GO:0050764">
    <property type="term" value="P:regulation of phagocytosis"/>
    <property type="evidence" value="ECO:0000250"/>
    <property type="project" value="UniProtKB"/>
</dbReference>
<dbReference type="GO" id="GO:0010543">
    <property type="term" value="P:regulation of platelet activation"/>
    <property type="evidence" value="ECO:0000250"/>
    <property type="project" value="UniProtKB"/>
</dbReference>
<dbReference type="GO" id="GO:0090330">
    <property type="term" value="P:regulation of platelet aggregation"/>
    <property type="evidence" value="ECO:0000250"/>
    <property type="project" value="UniProtKB"/>
</dbReference>
<dbReference type="GO" id="GO:0032928">
    <property type="term" value="P:regulation of superoxide anion generation"/>
    <property type="evidence" value="ECO:0000250"/>
    <property type="project" value="UniProtKB"/>
</dbReference>
<dbReference type="GO" id="GO:0010803">
    <property type="term" value="P:regulation of tumor necrosis factor-mediated signaling pathway"/>
    <property type="evidence" value="ECO:0000315"/>
    <property type="project" value="CACAO"/>
</dbReference>
<dbReference type="GO" id="GO:0002554">
    <property type="term" value="P:serotonin secretion by platelet"/>
    <property type="evidence" value="ECO:0000250"/>
    <property type="project" value="UniProtKB"/>
</dbReference>
<dbReference type="GO" id="GO:0002223">
    <property type="term" value="P:stimulatory C-type lectin receptor signaling pathway"/>
    <property type="evidence" value="ECO:0000250"/>
    <property type="project" value="ARUK-UCL"/>
</dbReference>
<dbReference type="CDD" id="cd05116">
    <property type="entry name" value="PTKc_Syk"/>
    <property type="match status" value="1"/>
</dbReference>
<dbReference type="CDD" id="cd10401">
    <property type="entry name" value="SH2_C-SH2_Syk_like"/>
    <property type="match status" value="1"/>
</dbReference>
<dbReference type="CDD" id="cd09938">
    <property type="entry name" value="SH2_N-SH2_Zap70_Syk_like"/>
    <property type="match status" value="1"/>
</dbReference>
<dbReference type="FunFam" id="1.10.930.10:FF:000001">
    <property type="entry name" value="Tyrosine-protein kinase"/>
    <property type="match status" value="1"/>
</dbReference>
<dbReference type="FunFam" id="3.30.200.20:FF:000185">
    <property type="entry name" value="Tyrosine-protein kinase"/>
    <property type="match status" value="1"/>
</dbReference>
<dbReference type="FunFam" id="3.30.505.10:FF:000031">
    <property type="entry name" value="Tyrosine-protein kinase"/>
    <property type="match status" value="1"/>
</dbReference>
<dbReference type="FunFam" id="3.30.505.10:FF:000038">
    <property type="entry name" value="Tyrosine-protein kinase"/>
    <property type="match status" value="1"/>
</dbReference>
<dbReference type="FunFam" id="1.10.510.10:FF:000216">
    <property type="entry name" value="Tyrosine-protein kinase SYK"/>
    <property type="match status" value="1"/>
</dbReference>
<dbReference type="Gene3D" id="3.30.200.20">
    <property type="entry name" value="Phosphorylase Kinase, domain 1"/>
    <property type="match status" value="1"/>
</dbReference>
<dbReference type="Gene3D" id="3.30.505.10">
    <property type="entry name" value="SH2 domain"/>
    <property type="match status" value="2"/>
</dbReference>
<dbReference type="Gene3D" id="1.10.930.10">
    <property type="entry name" value="Syk Kinase, Chain A, domain 2"/>
    <property type="match status" value="1"/>
</dbReference>
<dbReference type="Gene3D" id="1.10.510.10">
    <property type="entry name" value="Transferase(Phosphotransferase) domain 1"/>
    <property type="match status" value="1"/>
</dbReference>
<dbReference type="IDEAL" id="IID00714"/>
<dbReference type="InterPro" id="IPR011009">
    <property type="entry name" value="Kinase-like_dom_sf"/>
</dbReference>
<dbReference type="InterPro" id="IPR023420">
    <property type="entry name" value="Kinase_SYK/ZAP-70_inter-SH2_sf"/>
</dbReference>
<dbReference type="InterPro" id="IPR050198">
    <property type="entry name" value="Non-receptor_tyrosine_kinases"/>
</dbReference>
<dbReference type="InterPro" id="IPR000719">
    <property type="entry name" value="Prot_kinase_dom"/>
</dbReference>
<dbReference type="InterPro" id="IPR017441">
    <property type="entry name" value="Protein_kinase_ATP_BS"/>
</dbReference>
<dbReference type="InterPro" id="IPR001245">
    <property type="entry name" value="Ser-Thr/Tyr_kinase_cat_dom"/>
</dbReference>
<dbReference type="InterPro" id="IPR000980">
    <property type="entry name" value="SH2"/>
</dbReference>
<dbReference type="InterPro" id="IPR036860">
    <property type="entry name" value="SH2_dom_sf"/>
</dbReference>
<dbReference type="InterPro" id="IPR035838">
    <property type="entry name" value="SYK/ZAP-70_N_SH2"/>
</dbReference>
<dbReference type="InterPro" id="IPR008266">
    <property type="entry name" value="Tyr_kinase_AS"/>
</dbReference>
<dbReference type="InterPro" id="IPR020635">
    <property type="entry name" value="Tyr_kinase_cat_dom"/>
</dbReference>
<dbReference type="InterPro" id="IPR012234">
    <property type="entry name" value="Tyr_kinase_non-rcpt_SYK/ZAP70"/>
</dbReference>
<dbReference type="PANTHER" id="PTHR24418">
    <property type="entry name" value="TYROSINE-PROTEIN KINASE"/>
    <property type="match status" value="1"/>
</dbReference>
<dbReference type="Pfam" id="PF07714">
    <property type="entry name" value="PK_Tyr_Ser-Thr"/>
    <property type="match status" value="1"/>
</dbReference>
<dbReference type="Pfam" id="PF00017">
    <property type="entry name" value="SH2"/>
    <property type="match status" value="2"/>
</dbReference>
<dbReference type="PIRSF" id="PIRSF000604">
    <property type="entry name" value="TyrPK_SYK"/>
    <property type="match status" value="1"/>
</dbReference>
<dbReference type="PRINTS" id="PR00401">
    <property type="entry name" value="SH2DOMAIN"/>
</dbReference>
<dbReference type="PRINTS" id="PR00109">
    <property type="entry name" value="TYRKINASE"/>
</dbReference>
<dbReference type="SMART" id="SM00252">
    <property type="entry name" value="SH2"/>
    <property type="match status" value="2"/>
</dbReference>
<dbReference type="SMART" id="SM00219">
    <property type="entry name" value="TyrKc"/>
    <property type="match status" value="1"/>
</dbReference>
<dbReference type="SUPFAM" id="SSF56112">
    <property type="entry name" value="Protein kinase-like (PK-like)"/>
    <property type="match status" value="1"/>
</dbReference>
<dbReference type="SUPFAM" id="SSF55550">
    <property type="entry name" value="SH2 domain"/>
    <property type="match status" value="2"/>
</dbReference>
<dbReference type="PROSITE" id="PS00107">
    <property type="entry name" value="PROTEIN_KINASE_ATP"/>
    <property type="match status" value="1"/>
</dbReference>
<dbReference type="PROSITE" id="PS50011">
    <property type="entry name" value="PROTEIN_KINASE_DOM"/>
    <property type="match status" value="1"/>
</dbReference>
<dbReference type="PROSITE" id="PS00109">
    <property type="entry name" value="PROTEIN_KINASE_TYR"/>
    <property type="match status" value="1"/>
</dbReference>
<dbReference type="PROSITE" id="PS50001">
    <property type="entry name" value="SH2"/>
    <property type="match status" value="2"/>
</dbReference>
<comment type="function">
    <text evidence="2 10 11 12 13 16 23 24 27 29">Non-receptor tyrosine kinase which mediates signal transduction downstream of a variety of transmembrane receptors including classical immunoreceptors like the B-cell receptor (BCR). Regulates several biological processes including innate and adaptive immunity, cell adhesion, osteoclast maturation, platelet activation and vascular development (PubMed:12387735, PubMed:33782605). Assembles into signaling complexes with activated receptors at the plasma membrane via interaction between its SH2 domains and the receptor tyrosine-phosphorylated ITAM domains. The association with the receptor can also be indirect and mediated by adapter proteins containing ITAM or partial hemITAM domains. The phosphorylation of the ITAM domains is generally mediated by SRC subfamily kinases upon engagement of the receptor. More rarely signal transduction via SYK could be ITAM-independent. Direct downstream effectors phosphorylated by SYK include DEPTOR, VAV1, PLCG1, PI-3-kinase, LCP2 and BLNK (PubMed:12456653, PubMed:15388330, PubMed:34634301, PubMed:8657103). Initially identified as essential in B-cell receptor (BCR) signaling, it is necessary for the maturation of B-cells most probably at the pro-B to pre-B transition (PubMed:12456653). Activated upon BCR engagement, it phosphorylates and activates BLNK an adapter linking the activated BCR to downstream signaling adapters and effectors. It also phosphorylates and activates PLCG1 and the PKC signaling pathway. It also phosphorylates BTK and regulates its activity in B-cell antigen receptor (BCR)-coupled signaling. In addition to its function downstream of BCR also plays a role in T-cell receptor signaling. Also plays a crucial role in the innate immune response to fungal, bacterial and viral pathogens. It is for instance activated by the membrane lectin CLEC7A. Upon stimulation by fungal proteins, CLEC7A together with SYK activates immune cells inducing the production of ROS. Also activates the inflammasome and NF-kappa-B-mediated transcription of chemokines and cytokines in presence of pathogens. Regulates neutrophil degranulation and phagocytosis through activation of the MAPK signaling cascade (By similarity). Required for the stimulation of neutrophil phagocytosis by IL15 (PubMed:15123770). Also mediates the activation of dendritic cells by cell necrosis stimuli. Also involved in mast cells activation. Involved in interleukin-3/IL3-mediated signaling pathway in basophils (By similarity). Also functions downstream of receptors mediating cell adhesion (PubMed:12387735). Relays for instance, integrin-mediated neutrophils and macrophages activation and P-selectin receptor/SELPG-mediated recruitment of leukocytes to inflammatory loci. Also plays a role in non-immune processes. It is for instance involved in vascular development where it may regulate blood and lymphatic vascular separation. It is also required for osteoclast development and function. Functions in the activation of platelets by collagen, mediating PLCG2 phosphorylation and activation. May be coupled to the collagen receptor by the ITAM domain-containing FCER1G. Also activated by the membrane lectin CLEC1B that is required for activation of platelets by PDPN/podoplanin. Involved in platelet adhesion being activated by ITGB3 engaged by fibrinogen. Together with CEACAM20, enhances production of the cytokine CXCL8/IL-8 via the NFKB pathway and may thus have a role in the intestinal immune response (By similarity).</text>
</comment>
<comment type="catalytic activity">
    <reaction evidence="5 23 24">
        <text>L-tyrosyl-[protein] + ATP = O-phospho-L-tyrosyl-[protein] + ADP + H(+)</text>
        <dbReference type="Rhea" id="RHEA:10596"/>
        <dbReference type="Rhea" id="RHEA-COMP:10136"/>
        <dbReference type="Rhea" id="RHEA-COMP:20101"/>
        <dbReference type="ChEBI" id="CHEBI:15378"/>
        <dbReference type="ChEBI" id="CHEBI:30616"/>
        <dbReference type="ChEBI" id="CHEBI:46858"/>
        <dbReference type="ChEBI" id="CHEBI:61978"/>
        <dbReference type="ChEBI" id="CHEBI:456216"/>
        <dbReference type="EC" id="2.7.10.2"/>
    </reaction>
</comment>
<comment type="activity regulation">
    <text evidence="1">Autoinhibited. Intramolecular binding of the interdomains A and B (also called linker region) to parts of the catalytic domain keep the catalytic center in an inactive conformation. The phosphorylation of the interdomains or the binding of the SH2 domains with dually phosphorylated ITAM domains on transmembrane proteins disrupt those intramolecular interactions allowing the kinase domain to adopt an active conformation. The phosphorylation of SYK and of the ITAM domains which is responsible for SYK activation is essentially mediated by SRC subfamily kinases, like LYN, upon transmembrane receptors engagement. May also be negatively regulated by PTPN6 through dephosphorylation. Downstream signaling adapters and intermediates like BLNK or RHOH may mediate positive and/or negative feedback regulation. Negatively regulated by CBL and CBLB through ubiquitination and probable degradation. Phosphorylates SH3BP2 which in turn may regulate SYK through LYN (By similarity).</text>
</comment>
<comment type="subunit">
    <text evidence="1 2 6 8 9 10 12 14 15 16 17 18 19 20 21 22 27 28 29 30 31">Interacts with LYN; phosphorylates SYK (By similarity). Interacts with RHOH (phosphorylated); regulates mast cells activation (By similarity). Interacts with NFAM1 (phosphorylated); probably involved in BCR signaling (By similarity). Interacts with VAV1 (via SH2 domain); phosphorylates VAV1 upon BCR activation. Interacts with GAB2 (phosphorylated); probably involved in IgE Fc receptor signaling (By similarity). Interacts (via its SH2 domains) with CD79A (via its phosphorylated ITAM domain); the interaction stimulates SYK autophosphorylation and activation (By similarity). Interacts with FCRL3 (PubMed:11162587, PubMed:19843936). Interacts (via SH2 domains) with FCER1G (via ITAM domain); activates SYK and mediates neutrophils and macrophages integrin-mediated activation (By similarity). Interaction with FCER1G in basophils triggers IL3-induced IL4 production (By similarity). Interacts with ITGB2 and FGR; involved in ITGB2 downstream signaling (By similarity). Interacts with ITGB3; upon activation by ITGB3 promotes platelet adhesion. Interacts (via SH2 domains) with TYROBP (via ITAM domain); involved in neutrophils and macrophages integrin-mediated activation (By similarity). Interacts with MSN and SELPLG; mediates the selectin-dependent activation of SYK by SELPLG. Interacts with BLNK (via SH2 domain). Interacts (via the second SH2 domain) with USP25 (via C-terminus); phosphorylates USP25 and regulates USP25 intracellular levels. Interacts (via SH2 domains) with CLEC1B (dimer). Interacts with CLEC7A; participates in leukocyte activation in presence of fungal pathogens. Interacts (phosphorylated) with SLA; may regulate SYK through CBL recruitment. Interacts with YWHAG; attenuates BCR-induced membrane translocation and activation of SYK. Interacts (via SH2 domains) with GCSAM; the interaction increases after B-cell receptor stimulation, resulting in enhanced SYK autophosphorylation and activity. Interacts with TNS2; leading to the phosphorylation of SYK (PubMed:22019427). Interacts with FLNA (via filamin repeat 5); docks SYK to the plasma membrane (PubMed:20713593). Interacts with CEACAM1; lipopolysaccharide activated neutrophils induce phosphorylation of SYK resulting in the formation of a complex including TLR4 and the phosphorylated form of SYK and CEACAM1, which in turn, recruits PTPN6 that dephosphorylates SYK, reducing the production of reactive oxygen species (ROS) and lysosome disruption, leading to a reduction of the inflammasome activity (By similarity). Interacts (via SH2 domains) with CEACAM20 (phosphorylated form); the interaction further enhances CEACAM20 phosphorylation (By similarity). Interacts with IL15RA (PubMed:15123770). Interacts with MPL/TPOR; this interaction negatively regulates THPO-mediated ERK1/2 signaling (PubMed:24607955).</text>
</comment>
<comment type="subunit">
    <text evidence="25">(Microbial infection) Interacts with Epstein-Barr virus LMP2A.</text>
</comment>
<comment type="interaction">
    <interactant intactId="EBI-78302">
        <id>P43405</id>
    </interactant>
    <interactant intactId="EBI-77613">
        <id>P05067</id>
        <label>APP</label>
    </interactant>
    <organismsDiffer>false</organismsDiffer>
    <experiments>3</experiments>
</comment>
<comment type="interaction">
    <interactant intactId="EBI-78302">
        <id>P43405</id>
    </interactant>
    <interactant intactId="EBI-518228">
        <id>P22681</id>
        <label>CBL</label>
    </interactant>
    <organismsDiffer>false</organismsDiffer>
    <experiments>2</experiments>
</comment>
<comment type="interaction">
    <interactant intactId="EBI-78302">
        <id>P43405</id>
    </interactant>
    <interactant intactId="EBI-78277">
        <id>P20273</id>
        <label>CD22</label>
    </interactant>
    <organismsDiffer>false</organismsDiffer>
    <experiments>4</experiments>
</comment>
<comment type="interaction">
    <interactant intactId="EBI-78302">
        <id>P43405</id>
    </interactant>
    <interactant intactId="EBI-6139068">
        <id>P11049</id>
        <label>CD37</label>
    </interactant>
    <organismsDiffer>false</organismsDiffer>
    <experiments>3</experiments>
</comment>
<comment type="interaction">
    <interactant intactId="EBI-78302">
        <id>P43405</id>
    </interactant>
    <interactant intactId="EBI-1211297">
        <id>P07766</id>
        <label>CD3E</label>
    </interactant>
    <organismsDiffer>false</organismsDiffer>
    <experiments>6</experiments>
</comment>
<comment type="interaction">
    <interactant intactId="EBI-78302">
        <id>P43405</id>
    </interactant>
    <interactant intactId="EBI-3939278">
        <id>Q9BXN2</id>
        <label>CLEC7A</label>
    </interactant>
    <organismsDiffer>false</organismsDiffer>
    <experiments>2</experiments>
</comment>
<comment type="interaction">
    <interactant intactId="EBI-78302">
        <id>P43405</id>
    </interactant>
    <interactant intactId="EBI-297353">
        <id>P00533</id>
        <label>EGFR</label>
    </interactant>
    <organismsDiffer>false</organismsDiffer>
    <experiments>6</experiments>
</comment>
<comment type="interaction">
    <interactant intactId="EBI-78302">
        <id>P43405</id>
    </interactant>
    <interactant intactId="EBI-641062">
        <id>P04626</id>
        <label>ERBB2</label>
    </interactant>
    <organismsDiffer>false</organismsDiffer>
    <experiments>7</experiments>
</comment>
<comment type="interaction">
    <interactant intactId="EBI-78302">
        <id>P43405</id>
    </interactant>
    <interactant intactId="EBI-720706">
        <id>P21860</id>
        <label>ERBB3</label>
    </interactant>
    <organismsDiffer>false</organismsDiffer>
    <experiments>6</experiments>
</comment>
<comment type="interaction">
    <interactant intactId="EBI-78302">
        <id>P43405</id>
    </interactant>
    <interactant intactId="EBI-515289">
        <id>P30273</id>
        <label>FCER1G</label>
    </interactant>
    <organismsDiffer>false</organismsDiffer>
    <experiments>2</experiments>
</comment>
<comment type="interaction">
    <interactant intactId="EBI-78302">
        <id>P43405</id>
    </interactant>
    <interactant intactId="EBI-3946257">
        <id>P36888</id>
        <label>FLT3</label>
    </interactant>
    <organismsDiffer>false</organismsDiffer>
    <experiments>22</experiments>
</comment>
<comment type="interaction">
    <interactant intactId="EBI-78302">
        <id>P43405</id>
    </interactant>
    <interactant intactId="EBI-517684">
        <id>Q13480</id>
        <label>GAB1</label>
    </interactant>
    <organismsDiffer>false</organismsDiffer>
    <experiments>4</experiments>
</comment>
<comment type="interaction">
    <interactant intactId="EBI-78302">
        <id>P43405</id>
    </interactant>
    <interactant intactId="EBI-1348">
        <id>P06239</id>
        <label>LCK</label>
    </interactant>
    <organismsDiffer>false</organismsDiffer>
    <experiments>7</experiments>
</comment>
<comment type="interaction">
    <interactant intactId="EBI-78302">
        <id>P43405</id>
    </interactant>
    <interactant intactId="EBI-1039152">
        <id>P08581</id>
        <label>MET</label>
    </interactant>
    <organismsDiffer>false</organismsDiffer>
    <experiments>3</experiments>
</comment>
<comment type="interaction">
    <interactant intactId="EBI-78302">
        <id>P43405</id>
    </interactant>
    <interactant intactId="EBI-79387">
        <id>P19174</id>
        <label>PLCG1</label>
    </interactant>
    <organismsDiffer>false</organismsDiffer>
    <experiments>4</experiments>
</comment>
<comment type="interaction">
    <interactant intactId="EBI-78302">
        <id>P43405</id>
    </interactant>
    <interactant intactId="EBI-751215">
        <id>Q9ULZ3</id>
        <label>PYCARD</label>
    </interactant>
    <organismsDiffer>false</organismsDiffer>
    <experiments>4</experiments>
</comment>
<comment type="interaction">
    <interactant intactId="EBI-78302">
        <id>P43405</id>
    </interactant>
    <interactant intactId="EBI-490630">
        <id>Q9NP31</id>
        <label>SH2D2A</label>
    </interactant>
    <organismsDiffer>false</organismsDiffer>
    <experiments>3</experiments>
</comment>
<comment type="interaction">
    <interactant intactId="EBI-78302">
        <id>P43405</id>
    </interactant>
    <interactant intactId="EBI-518675">
        <id>P40763</id>
        <label>STAT3</label>
    </interactant>
    <organismsDiffer>false</organismsDiffer>
    <experiments>10</experiments>
</comment>
<comment type="interaction">
    <interactant intactId="EBI-78302">
        <id>P43405</id>
    </interactant>
    <interactant intactId="EBI-954084">
        <id>Q96IP4</id>
        <label>TENT5A</label>
    </interactant>
    <organismsDiffer>false</organismsDiffer>
    <experiments>3</experiments>
</comment>
<comment type="interaction">
    <interactant intactId="EBI-78302">
        <id>P43405</id>
    </interactant>
    <interactant intactId="EBI-710997">
        <id>P54274</id>
        <label>TERF1</label>
    </interactant>
    <organismsDiffer>false</organismsDiffer>
    <experiments>2</experiments>
</comment>
<comment type="interaction">
    <interactant intactId="EBI-78302">
        <id>P43405</id>
    </interactant>
    <interactant intactId="EBI-1380492">
        <id>Q8TF42</id>
        <label>UBASH3B</label>
    </interactant>
    <organismsDiffer>false</organismsDiffer>
    <experiments>2</experiments>
</comment>
<comment type="interaction">
    <interactant intactId="EBI-78302">
        <id>P43405</id>
    </interactant>
    <interactant intactId="EBI-2513462">
        <id>Q9UHP3</id>
        <label>USP25</label>
    </interactant>
    <organismsDiffer>false</organismsDiffer>
    <experiments>8</experiments>
</comment>
<comment type="interaction">
    <interactant intactId="EBI-25892332">
        <id>P43405-2</id>
    </interactant>
    <interactant intactId="EBI-640741">
        <id>P01023</id>
        <label>A2M</label>
    </interactant>
    <organismsDiffer>false</organismsDiffer>
    <experiments>3</experiments>
</comment>
<comment type="interaction">
    <interactant intactId="EBI-25892332">
        <id>P43405-2</id>
    </interactant>
    <interactant intactId="EBI-25646567">
        <id>Q06481-5</id>
        <label>APLP2</label>
    </interactant>
    <organismsDiffer>false</organismsDiffer>
    <experiments>3</experiments>
</comment>
<comment type="interaction">
    <interactant intactId="EBI-25892332">
        <id>P43405-2</id>
    </interactant>
    <interactant intactId="EBI-77613">
        <id>P05067</id>
        <label>APP</label>
    </interactant>
    <organismsDiffer>false</organismsDiffer>
    <experiments>3</experiments>
</comment>
<comment type="interaction">
    <interactant intactId="EBI-25892332">
        <id>P43405-2</id>
    </interactant>
    <interactant intactId="EBI-718504">
        <id>Q13867</id>
        <label>BLMH</label>
    </interactant>
    <organismsDiffer>false</organismsDiffer>
    <experiments>3</experiments>
</comment>
<comment type="interaction">
    <interactant intactId="EBI-25892332">
        <id>P43405-2</id>
    </interactant>
    <interactant intactId="EBI-25890990">
        <id>P27824-2</id>
        <label>CANX</label>
    </interactant>
    <organismsDiffer>false</organismsDiffer>
    <experiments>3</experiments>
</comment>
<comment type="interaction">
    <interactant intactId="EBI-25892332">
        <id>P43405-2</id>
    </interactant>
    <interactant intactId="EBI-25891175">
        <id>Q86YQ8-2</id>
        <label>CPNE8</label>
    </interactant>
    <organismsDiffer>false</organismsDiffer>
    <experiments>3</experiments>
</comment>
<comment type="interaction">
    <interactant intactId="EBI-25892332">
        <id>P43405-2</id>
    </interactant>
    <interactant intactId="EBI-713677">
        <id>Q9UGL9</id>
        <label>CRCT1</label>
    </interactant>
    <organismsDiffer>false</organismsDiffer>
    <experiments>3</experiments>
</comment>
<comment type="interaction">
    <interactant intactId="EBI-25892332">
        <id>P43405-2</id>
    </interactant>
    <interactant intactId="EBI-25840445">
        <id>O14576-2</id>
        <label>DYNC1I1</label>
    </interactant>
    <organismsDiffer>false</organismsDiffer>
    <experiments>3</experiments>
</comment>
<comment type="interaction">
    <interactant intactId="EBI-25892332">
        <id>P43405-2</id>
    </interactant>
    <interactant intactId="EBI-11052499">
        <id>P0DMV8</id>
        <label>HSPA1A</label>
    </interactant>
    <organismsDiffer>false</organismsDiffer>
    <experiments>3</experiments>
</comment>
<comment type="interaction">
    <interactant intactId="EBI-25892332">
        <id>P43405-2</id>
    </interactant>
    <interactant intactId="EBI-25833471">
        <id>Q07954-2</id>
        <label>LRP1</label>
    </interactant>
    <organismsDiffer>false</organismsDiffer>
    <experiments>3</experiments>
</comment>
<comment type="interaction">
    <interactant intactId="EBI-25892332">
        <id>P43405-2</id>
    </interactant>
    <interactant intactId="EBI-12135485">
        <id>P41271-2</id>
        <label>NBL1</label>
    </interactant>
    <organismsDiffer>false</organismsDiffer>
    <experiments>3</experiments>
</comment>
<comment type="interaction">
    <interactant intactId="EBI-25892332">
        <id>P43405-2</id>
    </interactant>
    <interactant intactId="EBI-357253">
        <id>P62136</id>
        <label>PPP1CA</label>
    </interactant>
    <organismsDiffer>false</organismsDiffer>
    <experiments>3</experiments>
</comment>
<comment type="interaction">
    <interactant intactId="EBI-25892332">
        <id>P43405-2</id>
    </interactant>
    <interactant intactId="EBI-413628">
        <id>P63000</id>
        <label>RAC1</label>
    </interactant>
    <organismsDiffer>false</organismsDiffer>
    <experiments>3</experiments>
</comment>
<comment type="interaction">
    <interactant intactId="EBI-25892332">
        <id>P43405-2</id>
    </interactant>
    <interactant intactId="EBI-9691288">
        <id>P29353-7</id>
        <label>SHC1</label>
    </interactant>
    <organismsDiffer>false</organismsDiffer>
    <experiments>3</experiments>
</comment>
<comment type="interaction">
    <interactant intactId="EBI-25892332">
        <id>P43405-2</id>
    </interactant>
    <interactant intactId="EBI-359276">
        <id>Q9Y4K3</id>
        <label>TRAF6</label>
    </interactant>
    <organismsDiffer>false</organismsDiffer>
    <experiments>3</experiments>
</comment>
<comment type="interaction">
    <interactant intactId="EBI-25892332">
        <id>P43405-2</id>
    </interactant>
    <interactant intactId="EBI-707773">
        <id>P17028</id>
        <label>ZNF24</label>
    </interactant>
    <organismsDiffer>false</organismsDiffer>
    <experiments>3</experiments>
</comment>
<comment type="subcellular location">
    <subcellularLocation>
        <location evidence="33">Cell membrane</location>
    </subcellularLocation>
    <subcellularLocation>
        <location evidence="33">Cytoplasm</location>
        <location evidence="33">Cytosol</location>
    </subcellularLocation>
</comment>
<comment type="alternative products">
    <event type="alternative splicing"/>
    <isoform>
        <id>P43405-1</id>
        <name>Long</name>
        <sequence type="displayed"/>
    </isoform>
    <isoform>
        <id>P43405-2</id>
        <name>Short</name>
        <sequence type="described" ref="VSP_005010"/>
    </isoform>
</comment>
<comment type="tissue specificity">
    <text evidence="12 26">Widely expressed in hematopoietic cells (at protein level) (PubMed:8163536). Expressed in neutrophils (at protein level) (PubMed:15123770). Within the B-cell compartment, expressed from pro- and pre-B cells to plasma cells (PubMed:8163536).</text>
</comment>
<comment type="domain">
    <text>The SH2 domains mediate the interaction of SYK with the phosphorylated ITAM domains of transmembrane proteins. Some proteins like CLEC1B have a partial ITAM domain (also called hemITAM) containing a single YxxL motif. The interaction with SYK requires CLEC1B homodimerization.</text>
</comment>
<comment type="PTM">
    <text evidence="1">Ubiquitinated by CBLB after BCR activation; which promotes proteasomal degradation.</text>
</comment>
<comment type="PTM">
    <text evidence="1 7 12 14 19">Autophosphorylated. Phosphorylated on tyrosine residues by LYN following receptors engagement. Phosphorylation on Tyr-323 creates a binding site for CBL, an adapter protein that serves as a negative regulator of BCR-stimulated calcium ion signaling. Phosphorylation at Tyr-348 creates a binding site for VAV1. Phosphorylation on Tyr-348 and Tyr-352 enhances the phosphorylation and activation of phospholipase C-gamma and the early phase of calcium ion mobilization via a phosphoinositide 3-kinase-independent pathway (By similarity). Phosphorylated on tyrosine residues in response to IL15 (PubMed:15123770). Phosphorylation on Ser-297 is very common, it peaks 5 minutes after BCR stimulation, and creates a binding site for YWHAG. Phosphorylation at Tyr-630 creates a binding site for BLNK. Dephosphorylated by PTPN6.</text>
</comment>
<comment type="disease" evidence="23">
    <disease id="DI-06146">
        <name>Immunodeficiency 82 with systemic inflammation</name>
        <acronym>IMD82</acronym>
        <description>An autosomal dominant immunologic disorder with onset in early childhood. It is characterized by recurrent infections with various organisms, and multi-organ inflammation that manifests as colitis, hepatitis, arthritis and dermatitis. Patients have a propensity for the development of lymphoma, usually in adulthood. Disease severity is variable.</description>
        <dbReference type="MIM" id="619381"/>
    </disease>
    <text>The disease is caused by variants affecting the gene represented in this entry.</text>
</comment>
<comment type="similarity">
    <text evidence="3">Belongs to the protein kinase superfamily. Tyr protein kinase family. SYK/ZAP-70 subfamily.</text>
</comment>
<comment type="online information" name="Atlas of Genetics and Cytogenetics in Oncology and Haematology">
    <link uri="https://atlasgeneticsoncology.org/gene/394/SYK"/>
</comment>
<name>KSYK_HUMAN</name>
<feature type="chain" id="PRO_0000088165" description="Tyrosine-protein kinase SYK">
    <location>
        <begin position="1"/>
        <end position="635"/>
    </location>
</feature>
<feature type="domain" description="SH2 1" evidence="4">
    <location>
        <begin position="15"/>
        <end position="107"/>
    </location>
</feature>
<feature type="domain" description="SH2 2" evidence="4">
    <location>
        <begin position="168"/>
        <end position="259"/>
    </location>
</feature>
<feature type="domain" description="Protein kinase" evidence="3">
    <location>
        <begin position="371"/>
        <end position="631"/>
    </location>
</feature>
<feature type="region of interest" description="Interdomain A">
    <location>
        <begin position="108"/>
        <end position="167"/>
    </location>
</feature>
<feature type="region of interest" description="Interdomain B">
    <location>
        <begin position="260"/>
        <end position="370"/>
    </location>
</feature>
<feature type="active site" description="Proton acceptor" evidence="3 5">
    <location>
        <position position="494"/>
    </location>
</feature>
<feature type="binding site" evidence="3">
    <location>
        <begin position="377"/>
        <end position="385"/>
    </location>
    <ligand>
        <name>ATP</name>
        <dbReference type="ChEBI" id="CHEBI:30616"/>
    </ligand>
</feature>
<feature type="binding site" evidence="3">
    <location>
        <position position="402"/>
    </location>
    <ligand>
        <name>ATP</name>
        <dbReference type="ChEBI" id="CHEBI:30616"/>
    </ligand>
</feature>
<feature type="modified residue" description="Phosphotyrosine" evidence="19 35">
    <location>
        <position position="28"/>
    </location>
</feature>
<feature type="modified residue" description="Phosphoserine" evidence="19">
    <location>
        <position position="44"/>
    </location>
</feature>
<feature type="modified residue" description="Phosphotyrosine" evidence="19">
    <location>
        <position position="47"/>
    </location>
</feature>
<feature type="modified residue" description="Phosphotyrosine" evidence="19">
    <location>
        <position position="131"/>
    </location>
</feature>
<feature type="modified residue" description="Phosphoserine" evidence="19">
    <location>
        <position position="202"/>
    </location>
</feature>
<feature type="modified residue" description="Phosphothreonine" evidence="19">
    <location>
        <position position="256"/>
    </location>
</feature>
<feature type="modified residue" description="Phosphoserine" evidence="19">
    <location>
        <position position="295"/>
    </location>
</feature>
<feature type="modified residue" description="Phosphotyrosine" evidence="19">
    <location>
        <position position="296"/>
    </location>
</feature>
<feature type="modified residue" description="Phosphoserine" evidence="19">
    <location>
        <position position="297"/>
    </location>
</feature>
<feature type="modified residue" description="Phosphoserine" evidence="19">
    <location>
        <position position="316"/>
    </location>
</feature>
<feature type="modified residue" description="Phosphothreonine" evidence="19">
    <location>
        <position position="317"/>
    </location>
</feature>
<feature type="modified residue" description="Phosphoserine" evidence="19">
    <location>
        <position position="319"/>
    </location>
</feature>
<feature type="modified residue" description="Phosphotyrosine; by LYN" evidence="19 34">
    <location>
        <position position="323"/>
    </location>
</feature>
<feature type="modified residue" description="Phosphothreonine" evidence="19">
    <location>
        <position position="345"/>
    </location>
</feature>
<feature type="modified residue" description="Phosphotyrosine" evidence="19">
    <location>
        <position position="348"/>
    </location>
</feature>
<feature type="modified residue" description="Phosphoserine" evidence="19">
    <location>
        <position position="350"/>
    </location>
</feature>
<feature type="modified residue" description="Phosphotyrosine" evidence="19">
    <location>
        <position position="352"/>
    </location>
</feature>
<feature type="modified residue" description="Phosphotyrosine" evidence="19">
    <location>
        <position position="364"/>
    </location>
</feature>
<feature type="modified residue" description="Phosphoserine" evidence="19">
    <location>
        <position position="379"/>
    </location>
</feature>
<feature type="modified residue" description="Phosphothreonine" evidence="19">
    <location>
        <position position="384"/>
    </location>
</feature>
<feature type="modified residue" description="Phosphotyrosine" evidence="19">
    <location>
        <position position="484"/>
    </location>
</feature>
<feature type="modified residue" description="Phosphotyrosine" evidence="19">
    <location>
        <position position="507"/>
    </location>
</feature>
<feature type="modified residue" description="Phosphotyrosine; by autocatalysis" evidence="19">
    <location>
        <position position="525"/>
    </location>
</feature>
<feature type="modified residue" description="Phosphotyrosine" evidence="19">
    <location>
        <position position="526"/>
    </location>
</feature>
<feature type="modified residue" description="Phosphothreonine" evidence="19">
    <location>
        <position position="530"/>
    </location>
</feature>
<feature type="modified residue" description="Phosphotyrosine" evidence="2">
    <location>
        <position position="546"/>
    </location>
</feature>
<feature type="modified residue" description="Phosphoserine" evidence="19">
    <location>
        <position position="579"/>
    </location>
</feature>
<feature type="modified residue" description="Phosphothreonine" evidence="19">
    <location>
        <position position="582"/>
    </location>
</feature>
<feature type="modified residue" description="Phosphotyrosine" evidence="19">
    <location>
        <position position="629"/>
    </location>
</feature>
<feature type="modified residue" description="Phosphotyrosine" evidence="14 19">
    <location>
        <position position="630"/>
    </location>
</feature>
<feature type="modified residue" description="Phosphotyrosine" evidence="19">
    <location>
        <position position="631"/>
    </location>
</feature>
<feature type="splice variant" id="VSP_005010" description="In isoform Short." evidence="32">
    <location>
        <begin position="283"/>
        <end position="305"/>
    </location>
</feature>
<feature type="sequence variant" id="VAR_033838" description="In dbSNP:rs16906862.">
    <original>R</original>
    <variation>H</variation>
    <location>
        <position position="45"/>
    </location>
</feature>
<feature type="sequence variant" id="VAR_085995" description="In IMD82; constitutively active protein tyrosine kinase activity." evidence="23">
    <original>P</original>
    <variation>T</variation>
    <location>
        <position position="342"/>
    </location>
</feature>
<feature type="sequence variant" id="VAR_085996" description="In IMD82; constitutively active protein tyrosine kinase activity." evidence="23">
    <original>A</original>
    <variation>T</variation>
    <location>
        <position position="353"/>
    </location>
</feature>
<feature type="sequence variant" id="VAR_085997" description="In IMD82; constitutively active protein tyrosine kinase activity." evidence="23">
    <original>M</original>
    <variation>I</variation>
    <location>
        <position position="450"/>
    </location>
</feature>
<feature type="sequence variant" id="VAR_085998" description="In IMD82; constitutively active protein tyrosine kinase activity." evidence="23">
    <original>S</original>
    <variation>F</variation>
    <location>
        <position position="550"/>
    </location>
</feature>
<feature type="sequence variant" id="VAR_085999" description="In IMD82; constitutively active protein tyrosine kinase activity." evidence="23">
    <original>S</original>
    <variation>Y</variation>
    <location>
        <position position="550"/>
    </location>
</feature>
<feature type="mutagenesis site" description="Abolishes YWHAG binding." evidence="19">
    <original>S</original>
    <variation>A</variation>
    <location>
        <position position="297"/>
    </location>
</feature>
<feature type="mutagenesis site" description="Loss of interaction with BLNK." evidence="14">
    <original>Y</original>
    <variation>F</variation>
    <location>
        <position position="630"/>
    </location>
</feature>
<feature type="sequence conflict" description="In Ref. 5; CAA51970." evidence="33" ref="5">
    <original>P</original>
    <variation>A</variation>
    <location>
        <position position="119"/>
    </location>
</feature>
<feature type="sequence conflict" description="In Ref. 5; CAA51970." evidence="33" ref="5">
    <original>G</original>
    <variation>P</variation>
    <location>
        <position position="250"/>
    </location>
</feature>
<feature type="helix" evidence="45">
    <location>
        <begin position="10"/>
        <end position="12"/>
    </location>
</feature>
<feature type="helix" evidence="40">
    <location>
        <begin position="22"/>
        <end position="31"/>
    </location>
</feature>
<feature type="strand" evidence="40">
    <location>
        <begin position="38"/>
        <end position="43"/>
    </location>
</feature>
<feature type="strand" evidence="40">
    <location>
        <begin position="47"/>
        <end position="49"/>
    </location>
</feature>
<feature type="strand" evidence="40">
    <location>
        <begin position="51"/>
        <end position="57"/>
    </location>
</feature>
<feature type="strand" evidence="40">
    <location>
        <begin position="60"/>
        <end position="68"/>
    </location>
</feature>
<feature type="strand" evidence="40">
    <location>
        <begin position="74"/>
        <end position="76"/>
    </location>
</feature>
<feature type="strand" evidence="40">
    <location>
        <begin position="82"/>
        <end position="84"/>
    </location>
</feature>
<feature type="helix" evidence="40">
    <location>
        <begin position="85"/>
        <end position="92"/>
    </location>
</feature>
<feature type="strand" evidence="40">
    <location>
        <begin position="99"/>
        <end position="101"/>
    </location>
</feature>
<feature type="helix" evidence="40">
    <location>
        <begin position="119"/>
        <end position="136"/>
    </location>
</feature>
<feature type="helix" evidence="40">
    <location>
        <begin position="140"/>
        <end position="158"/>
    </location>
</feature>
<feature type="helix" evidence="40">
    <location>
        <begin position="163"/>
        <end position="165"/>
    </location>
</feature>
<feature type="strand" evidence="36">
    <location>
        <begin position="169"/>
        <end position="172"/>
    </location>
</feature>
<feature type="helix" evidence="40">
    <location>
        <begin position="175"/>
        <end position="183"/>
    </location>
</feature>
<feature type="strand" evidence="40">
    <location>
        <begin position="184"/>
        <end position="186"/>
    </location>
</feature>
<feature type="strand" evidence="37">
    <location>
        <begin position="187"/>
        <end position="189"/>
    </location>
</feature>
<feature type="strand" evidence="40">
    <location>
        <begin position="192"/>
        <end position="201"/>
    </location>
</feature>
<feature type="strand" evidence="40">
    <location>
        <begin position="203"/>
        <end position="209"/>
    </location>
</feature>
<feature type="strand" evidence="40">
    <location>
        <begin position="212"/>
        <end position="220"/>
    </location>
</feature>
<feature type="strand" evidence="37">
    <location>
        <begin position="221"/>
        <end position="224"/>
    </location>
</feature>
<feature type="strand" evidence="40">
    <location>
        <begin position="226"/>
        <end position="228"/>
    </location>
</feature>
<feature type="strand" evidence="37">
    <location>
        <begin position="229"/>
        <end position="231"/>
    </location>
</feature>
<feature type="strand" evidence="40">
    <location>
        <begin position="234"/>
        <end position="236"/>
    </location>
</feature>
<feature type="helix" evidence="40">
    <location>
        <begin position="237"/>
        <end position="244"/>
    </location>
</feature>
<feature type="strand" evidence="40">
    <location>
        <begin position="251"/>
        <end position="253"/>
    </location>
</feature>
<feature type="helix" evidence="40">
    <location>
        <begin position="342"/>
        <end position="344"/>
    </location>
</feature>
<feature type="helix" evidence="39">
    <location>
        <begin position="346"/>
        <end position="348"/>
    </location>
</feature>
<feature type="helix" evidence="39">
    <location>
        <begin position="351"/>
        <end position="353"/>
    </location>
</feature>
<feature type="helix" evidence="43">
    <location>
        <begin position="360"/>
        <end position="363"/>
    </location>
</feature>
<feature type="helix" evidence="42">
    <location>
        <begin position="367"/>
        <end position="369"/>
    </location>
</feature>
<feature type="strand" evidence="42">
    <location>
        <begin position="370"/>
        <end position="372"/>
    </location>
</feature>
<feature type="strand" evidence="44">
    <location>
        <begin position="377"/>
        <end position="380"/>
    </location>
</feature>
<feature type="strand" evidence="42">
    <location>
        <begin position="384"/>
        <end position="391"/>
    </location>
</feature>
<feature type="strand" evidence="42">
    <location>
        <begin position="393"/>
        <end position="409"/>
    </location>
</feature>
<feature type="helix" evidence="42">
    <location>
        <begin position="411"/>
        <end position="424"/>
    </location>
</feature>
<feature type="strand" evidence="42">
    <location>
        <begin position="435"/>
        <end position="449"/>
    </location>
</feature>
<feature type="helix" evidence="42">
    <location>
        <begin position="456"/>
        <end position="462"/>
    </location>
</feature>
<feature type="helix" evidence="42">
    <location>
        <begin position="468"/>
        <end position="487"/>
    </location>
</feature>
<feature type="helix" evidence="42">
    <location>
        <begin position="497"/>
        <end position="499"/>
    </location>
</feature>
<feature type="strand" evidence="42">
    <location>
        <begin position="500"/>
        <end position="504"/>
    </location>
</feature>
<feature type="strand" evidence="42">
    <location>
        <begin position="507"/>
        <end position="510"/>
    </location>
</feature>
<feature type="helix" evidence="41">
    <location>
        <begin position="513"/>
        <end position="515"/>
    </location>
</feature>
<feature type="strand" evidence="42">
    <location>
        <begin position="524"/>
        <end position="527"/>
    </location>
</feature>
<feature type="helix" evidence="42">
    <location>
        <begin position="536"/>
        <end position="538"/>
    </location>
</feature>
<feature type="helix" evidence="42">
    <location>
        <begin position="541"/>
        <end position="546"/>
    </location>
</feature>
<feature type="strand" evidence="42">
    <location>
        <begin position="548"/>
        <end position="550"/>
    </location>
</feature>
<feature type="helix" evidence="42">
    <location>
        <begin position="551"/>
        <end position="566"/>
    </location>
</feature>
<feature type="turn" evidence="42">
    <location>
        <begin position="567"/>
        <end position="569"/>
    </location>
</feature>
<feature type="turn" evidence="42">
    <location>
        <begin position="572"/>
        <end position="575"/>
    </location>
</feature>
<feature type="helix" evidence="42">
    <location>
        <begin position="578"/>
        <end position="586"/>
    </location>
</feature>
<feature type="strand" evidence="38">
    <location>
        <begin position="589"/>
        <end position="591"/>
    </location>
</feature>
<feature type="helix" evidence="42">
    <location>
        <begin position="599"/>
        <end position="608"/>
    </location>
</feature>
<feature type="helix" evidence="42">
    <location>
        <begin position="613"/>
        <end position="615"/>
    </location>
</feature>
<feature type="helix" evidence="42">
    <location>
        <begin position="619"/>
        <end position="624"/>
    </location>
</feature>
<accession>P43405</accession>
<keyword id="KW-0002">3D-structure</keyword>
<keyword id="KW-1064">Adaptive immunity</keyword>
<keyword id="KW-0025">Alternative splicing</keyword>
<keyword id="KW-0037">Angiogenesis</keyword>
<keyword id="KW-0067">ATP-binding</keyword>
<keyword id="KW-1003">Cell membrane</keyword>
<keyword id="KW-0963">Cytoplasm</keyword>
<keyword id="KW-0225">Disease variant</keyword>
<keyword id="KW-0945">Host-virus interaction</keyword>
<keyword id="KW-0391">Immunity</keyword>
<keyword id="KW-0399">Innate immunity</keyword>
<keyword id="KW-0418">Kinase</keyword>
<keyword id="KW-0472">Membrane</keyword>
<keyword id="KW-0547">Nucleotide-binding</keyword>
<keyword id="KW-0597">Phosphoprotein</keyword>
<keyword id="KW-1267">Proteomics identification</keyword>
<keyword id="KW-1185">Reference proteome</keyword>
<keyword id="KW-0677">Repeat</keyword>
<keyword id="KW-0727">SH2 domain</keyword>
<keyword id="KW-0808">Transferase</keyword>
<keyword id="KW-0829">Tyrosine-protein kinase</keyword>
<keyword id="KW-0832">Ubl conjugation</keyword>
<sequence>MASSGMADSANHLPFFFGNITREEAEDYLVQGGMSDGLYLLRQSRNYLGGFALSVAHGRKAHHYTIERELNGTYAIAGGRTHASPADLCHYHSQESDGLVCLLKKPFNRPQGVQPKTGPFEDLKENLIREYVKQTWNLQGQALEQAIISQKPQLEKLIATTAHEKMPWFHGKISREESEQIVLIGSKTNGKFLIRARDNNGSYALCLLHEGKVLHYRIDKDKTGKLSIPEGKKFDTLWQLVEHYSYKADGLLRVLTVPCQKIGTQGNVNFGGRPQLPGSHPATWSAGGIISRIKSYSFPKPGHRKSSPAQGNRQESTVSFNPYEPELAPWAADKGPQREALPMDTEVYESPYADPEEIRPKEVYLDRKLLTLEDKELGSGNFGTVKKGYYQMKKVVKTVAVKILKNEANDPALKDELLAEANVMQQLDNPYIVRMIGICEAESWMLVMEMAELGPLNKYLQQNRHVKDKNIIELVHQVSMGMKYLEESNFVHRDLAARNVLLVTQHYAKISDFGLSKALRADENYYKAQTHGKWPVKWYAPECINYYKFSSKSDVWSFGVLMWEAFSYGQKPYRGMKGSEVTAMLEKGERMGCPAGCPREMYDLMNLCWTYDVENRPGFAAVELRLRNYYYDVVN</sequence>
<reference key="1">
    <citation type="journal article" date="1994" name="Biochem. Biophys. Res. Commun.">
        <title>Cloning of the cDNA for the deleted syk kinase homologous to ZAP-70 from human basophilic leukemia cell line (KU812).</title>
        <authorList>
            <person name="Yagi S."/>
            <person name="Suzuki K."/>
            <person name="Hasegawa A."/>
            <person name="Okumura K."/>
            <person name="Ra C."/>
        </authorList>
    </citation>
    <scope>NUCLEOTIDE SEQUENCE [MRNA]</scope>
</reference>
<reference key="2">
    <citation type="journal article" date="1994" name="J. Biol. Chem.">
        <title>Molecular cloning of human Syk. A B cell protein-tyrosine kinase associated with the surface immunoglobulin M-B cell receptor complex.</title>
        <authorList>
            <person name="Law C.-L."/>
            <person name="Sidorenko S.P."/>
            <person name="Chandran K.A."/>
            <person name="Draves K.E."/>
            <person name="Chan A.C."/>
            <person name="Weiss A."/>
            <person name="Edelhoff S."/>
            <person name="Disteche C.M."/>
            <person name="Clark E.A."/>
        </authorList>
    </citation>
    <scope>NUCLEOTIDE SEQUENCE [MRNA]</scope>
    <scope>TISSUE SPECIFICITY</scope>
    <scope>AUTOPHOSPHORYLATION</scope>
</reference>
<reference key="3">
    <citation type="journal article" date="2004" name="Nature">
        <title>DNA sequence and analysis of human chromosome 9.</title>
        <authorList>
            <person name="Humphray S.J."/>
            <person name="Oliver K."/>
            <person name="Hunt A.R."/>
            <person name="Plumb R.W."/>
            <person name="Loveland J.E."/>
            <person name="Howe K.L."/>
            <person name="Andrews T.D."/>
            <person name="Searle S."/>
            <person name="Hunt S.E."/>
            <person name="Scott C.E."/>
            <person name="Jones M.C."/>
            <person name="Ainscough R."/>
            <person name="Almeida J.P."/>
            <person name="Ambrose K.D."/>
            <person name="Ashwell R.I.S."/>
            <person name="Babbage A.K."/>
            <person name="Babbage S."/>
            <person name="Bagguley C.L."/>
            <person name="Bailey J."/>
            <person name="Banerjee R."/>
            <person name="Barker D.J."/>
            <person name="Barlow K.F."/>
            <person name="Bates K."/>
            <person name="Beasley H."/>
            <person name="Beasley O."/>
            <person name="Bird C.P."/>
            <person name="Bray-Allen S."/>
            <person name="Brown A.J."/>
            <person name="Brown J.Y."/>
            <person name="Burford D."/>
            <person name="Burrill W."/>
            <person name="Burton J."/>
            <person name="Carder C."/>
            <person name="Carter N.P."/>
            <person name="Chapman J.C."/>
            <person name="Chen Y."/>
            <person name="Clarke G."/>
            <person name="Clark S.Y."/>
            <person name="Clee C.M."/>
            <person name="Clegg S."/>
            <person name="Collier R.E."/>
            <person name="Corby N."/>
            <person name="Crosier M."/>
            <person name="Cummings A.T."/>
            <person name="Davies J."/>
            <person name="Dhami P."/>
            <person name="Dunn M."/>
            <person name="Dutta I."/>
            <person name="Dyer L.W."/>
            <person name="Earthrowl M.E."/>
            <person name="Faulkner L."/>
            <person name="Fleming C.J."/>
            <person name="Frankish A."/>
            <person name="Frankland J.A."/>
            <person name="French L."/>
            <person name="Fricker D.G."/>
            <person name="Garner P."/>
            <person name="Garnett J."/>
            <person name="Ghori J."/>
            <person name="Gilbert J.G.R."/>
            <person name="Glison C."/>
            <person name="Grafham D.V."/>
            <person name="Gribble S."/>
            <person name="Griffiths C."/>
            <person name="Griffiths-Jones S."/>
            <person name="Grocock R."/>
            <person name="Guy J."/>
            <person name="Hall R.E."/>
            <person name="Hammond S."/>
            <person name="Harley J.L."/>
            <person name="Harrison E.S.I."/>
            <person name="Hart E.A."/>
            <person name="Heath P.D."/>
            <person name="Henderson C.D."/>
            <person name="Hopkins B.L."/>
            <person name="Howard P.J."/>
            <person name="Howden P.J."/>
            <person name="Huckle E."/>
            <person name="Johnson C."/>
            <person name="Johnson D."/>
            <person name="Joy A.A."/>
            <person name="Kay M."/>
            <person name="Keenan S."/>
            <person name="Kershaw J.K."/>
            <person name="Kimberley A.M."/>
            <person name="King A."/>
            <person name="Knights A."/>
            <person name="Laird G.K."/>
            <person name="Langford C."/>
            <person name="Lawlor S."/>
            <person name="Leongamornlert D.A."/>
            <person name="Leversha M."/>
            <person name="Lloyd C."/>
            <person name="Lloyd D.M."/>
            <person name="Lovell J."/>
            <person name="Martin S."/>
            <person name="Mashreghi-Mohammadi M."/>
            <person name="Matthews L."/>
            <person name="McLaren S."/>
            <person name="McLay K.E."/>
            <person name="McMurray A."/>
            <person name="Milne S."/>
            <person name="Nickerson T."/>
            <person name="Nisbett J."/>
            <person name="Nordsiek G."/>
            <person name="Pearce A.V."/>
            <person name="Peck A.I."/>
            <person name="Porter K.M."/>
            <person name="Pandian R."/>
            <person name="Pelan S."/>
            <person name="Phillimore B."/>
            <person name="Povey S."/>
            <person name="Ramsey Y."/>
            <person name="Rand V."/>
            <person name="Scharfe M."/>
            <person name="Sehra H.K."/>
            <person name="Shownkeen R."/>
            <person name="Sims S.K."/>
            <person name="Skuce C.D."/>
            <person name="Smith M."/>
            <person name="Steward C.A."/>
            <person name="Swarbreck D."/>
            <person name="Sycamore N."/>
            <person name="Tester J."/>
            <person name="Thorpe A."/>
            <person name="Tracey A."/>
            <person name="Tromans A."/>
            <person name="Thomas D.W."/>
            <person name="Wall M."/>
            <person name="Wallis J.M."/>
            <person name="West A.P."/>
            <person name="Whitehead S.L."/>
            <person name="Willey D.L."/>
            <person name="Williams S.A."/>
            <person name="Wilming L."/>
            <person name="Wray P.W."/>
            <person name="Young L."/>
            <person name="Ashurst J.L."/>
            <person name="Coulson A."/>
            <person name="Blocker H."/>
            <person name="Durbin R.M."/>
            <person name="Sulston J.E."/>
            <person name="Hubbard T."/>
            <person name="Jackson M.J."/>
            <person name="Bentley D.R."/>
            <person name="Beck S."/>
            <person name="Rogers J."/>
            <person name="Dunham I."/>
        </authorList>
    </citation>
    <scope>NUCLEOTIDE SEQUENCE [LARGE SCALE GENOMIC DNA]</scope>
</reference>
<reference key="4">
    <citation type="journal article" date="2004" name="Genome Res.">
        <title>The status, quality, and expansion of the NIH full-length cDNA project: the Mammalian Gene Collection (MGC).</title>
        <authorList>
            <consortium name="The MGC Project Team"/>
        </authorList>
    </citation>
    <scope>NUCLEOTIDE SEQUENCE [LARGE SCALE MRNA] (ISOFORMS LONG AND SHORT)</scope>
    <source>
        <tissue>Eye</tissue>
        <tissue>Lymph</tissue>
    </source>
</reference>
<reference key="5">
    <citation type="journal article" date="1994" name="Immunogenetics">
        <title>Molecular cloning of the human homologue to the pig protein-tyrosine kinase syk.</title>
        <authorList>
            <person name="Mueller B."/>
            <person name="Cooper L."/>
            <person name="Terhorst C."/>
        </authorList>
    </citation>
    <scope>NUCLEOTIDE SEQUENCE [MRNA] OF 6-635</scope>
    <source>
        <tissue>Tonsil</tissue>
    </source>
</reference>
<reference key="6">
    <citation type="journal article" date="1995" name="Immunity">
        <title>Integral membrane protein 2 of Epstein-Barr virus regulates reactivation from latency through dominant negative effects on protein-tyrosine kinases.</title>
        <authorList>
            <person name="Miller C.L."/>
            <person name="Burkhardt A.L."/>
            <person name="Lee J.H."/>
            <person name="Stealey B."/>
            <person name="Longnecker R."/>
            <person name="Bolen J.B."/>
            <person name="Kieff E."/>
        </authorList>
    </citation>
    <scope>INTERACTION WITH EPSTEIN-BARR VIRUS LMP2A (MICROBIAL INFECTION)</scope>
</reference>
<reference key="7">
    <citation type="journal article" date="1996" name="Immunity">
        <title>Functional and physical interactions of Syk family kinases with the Vav proto-oncogene product.</title>
        <authorList>
            <person name="Deckert M."/>
            <person name="Tartare-Deckert S."/>
            <person name="Couture C."/>
            <person name="Mustelin T."/>
            <person name="Altman A."/>
        </authorList>
    </citation>
    <scope>INTERACTION WITH VAV1</scope>
</reference>
<reference key="8">
    <citation type="journal article" date="1996" name="Mol. Cell. Biol.">
        <title>Phospholipase C-gamma1 interacts with conserved phosphotyrosyl residues in the linker region of Syk and is a substrate for Syk.</title>
        <authorList>
            <person name="Law C.L."/>
            <person name="Chandran K.A."/>
            <person name="Sidorenko S.P."/>
            <person name="Clark E.A."/>
        </authorList>
    </citation>
    <scope>FUNCTION IN PHOSPHORYLATION OF PLCG1</scope>
    <scope>INTERACTION WITH PLCG1</scope>
</reference>
<reference key="9">
    <citation type="journal article" date="1998" name="J. Biol. Chem.">
        <title>Coordinated regulation of the tyrosine phosphorylation of Cbl by Fyn and Syk tyrosine kinases.</title>
        <authorList>
            <person name="Deckert M."/>
            <person name="Elly C."/>
            <person name="Altman A."/>
            <person name="Liu Y.C."/>
        </authorList>
    </citation>
    <scope>FUNCTION IN PHOSPHORYLATION OF CBL</scope>
    <scope>INTERACTION WITH CBL</scope>
</reference>
<reference key="10">
    <citation type="journal article" date="1998" name="J. Biol. Chem.">
        <title>Cbl-mediated negative regulation of the Syk tyrosine kinase. A critical role for Cbl phosphotyrosine-binding domain binding to Syk phosphotyrosine 323.</title>
        <authorList>
            <person name="Lupher M.L. Jr."/>
            <person name="Rao N."/>
            <person name="Lill N.L."/>
            <person name="Andoniou C.E."/>
            <person name="Miyake S."/>
            <person name="Clark E.A."/>
            <person name="Druker B."/>
            <person name="Band H."/>
        </authorList>
    </citation>
    <scope>ACTIVITY REGULATION</scope>
    <scope>INTERACTION WITH CBL</scope>
</reference>
<reference key="11">
    <citation type="journal article" date="1999" name="Eur. J. Immunol.">
        <title>Dephosphorylation of ZAP-70 and inhibition of T cell activation by activated SHP1.</title>
        <authorList>
            <person name="Brockdorff J."/>
            <person name="Williams S."/>
            <person name="Couture C."/>
            <person name="Mustelin T."/>
        </authorList>
    </citation>
    <scope>PHOSPHORYLATION</scope>
    <scope>DEPHOSPHORYLATION BY PTPN6</scope>
    <scope>ACTIVITY REGULATION</scope>
</reference>
<reference key="12">
    <citation type="journal article" date="1999" name="Proc. Natl. Acad. Sci. U.S.A.">
        <title>SLAP, a dimeric adapter protein, plays a functional role in T cell receptor signaling.</title>
        <authorList>
            <person name="Tang J."/>
            <person name="Sawasdikosol S."/>
            <person name="Chang J.-H."/>
            <person name="Burakoff S.J."/>
        </authorList>
    </citation>
    <scope>INTERACTION WITH SLA</scope>
</reference>
<reference key="13">
    <citation type="journal article" date="2001" name="Biochem. Biophys. Res. Commun.">
        <title>Molecular cloning and characterization of SPAP1, an inhibitory receptor.</title>
        <authorList>
            <person name="Xu M.-J."/>
            <person name="Zhao R."/>
            <person name="Zhao Z.J."/>
        </authorList>
    </citation>
    <scope>INTERACTION WITH FCRL3</scope>
</reference>
<reference key="14">
    <citation type="journal article" date="2002" name="EMBO J.">
        <title>BLNK: molecular scaffolding through 'cis'-mediated organization of signaling proteins.</title>
        <authorList>
            <person name="Chiu C.W."/>
            <person name="Dalton M."/>
            <person name="Ishiai M."/>
            <person name="Kurosaki T."/>
            <person name="Chan A.C."/>
        </authorList>
    </citation>
    <scope>FUNCTION IN B-CELL RECEPTOR SIGNALING PATHWAY</scope>
    <scope>FUNCTION IN PHOSPHORYLATION OF BLNK</scope>
</reference>
<reference key="15">
    <citation type="journal article" date="2002" name="Immunity">
        <title>ITAM-based interaction of ERM proteins with Syk mediates signaling by the leukocyte adhesion receptor PSGL-1.</title>
        <authorList>
            <person name="Urzainqui A."/>
            <person name="Serrador J.M."/>
            <person name="Viedma F."/>
            <person name="Yanez-Mo M."/>
            <person name="Rodriguez A."/>
            <person name="Corbi A.L."/>
            <person name="Alonso-Lebrero J.L."/>
            <person name="Luque A."/>
            <person name="Deckert M."/>
            <person name="Vazquez J."/>
            <person name="Sanchez-Madrid F."/>
        </authorList>
    </citation>
    <scope>FUNCTION IN CELL ADHESION</scope>
    <scope>INTERACTION WITH SELPLG AND MSN</scope>
</reference>
<reference key="16">
    <citation type="journal article" date="2002" name="J. Cell Biol.">
        <title>Coordinate interactions of Csk, Src, and Syk kinases with [alpha]IIb[beta]3 initiate integrin signaling to the cytoskeleton.</title>
        <authorList>
            <person name="Obergfell A."/>
            <person name="Eto K."/>
            <person name="Mocsai A."/>
            <person name="Buensuceso C."/>
            <person name="Moores S.L."/>
            <person name="Brugge J.S."/>
            <person name="Lowell C.A."/>
            <person name="Shattil S.J."/>
        </authorList>
    </citation>
    <scope>INTERACTION WITH ITGB3</scope>
</reference>
<reference key="17">
    <citation type="journal article" date="2004" name="FEBS Lett.">
        <title>Association of the Src homology 2 domain-containing leukocyte phosphoprotein of 76 kD (SLP-76) with the p85 subunit of phosphoinositide 3-kinase.</title>
        <authorList>
            <person name="Shim E.K."/>
            <person name="Moon C.S."/>
            <person name="Lee G.Y."/>
            <person name="Ha Y.J."/>
            <person name="Chae S.K."/>
            <person name="Lee J.R."/>
        </authorList>
    </citation>
    <scope>FUNCTION IN PHOSPHORYLATION OF LCP2</scope>
</reference>
<reference key="18">
    <citation type="journal article" date="2004" name="J. Leukoc. Biol.">
        <title>Interleukin-15 enhances human neutrophil phagocytosis by a Syk-dependent mechanism: importance of the IL-15Ralpha chain.</title>
        <authorList>
            <person name="Ratthe C."/>
            <person name="Girard D."/>
        </authorList>
    </citation>
    <scope>FUNCTION</scope>
    <scope>INTERACTION WITH IL15RA</scope>
    <scope>TISSUE SPECIFICITY</scope>
    <scope>PHOSPHORYLATION</scope>
</reference>
<reference key="19">
    <citation type="journal article" date="2008" name="EMBO J.">
        <title>The kinase Syk as an adaptor controlling sustained calcium signalling and B-cell development.</title>
        <authorList>
            <person name="Kulathu Y."/>
            <person name="Hobeika E."/>
            <person name="Turchinovich G."/>
            <person name="Reth M."/>
        </authorList>
    </citation>
    <scope>INTERACTION WITH BLNK</scope>
    <scope>ACTIVITY REGULATION</scope>
    <scope>MUTAGENESIS OF TYR-630</scope>
    <scope>PHOSPHORYLATION AT TYR-630</scope>
</reference>
<reference key="20">
    <citation type="journal article" date="2008" name="J. Biol. Chem.">
        <title>Molecular mechanism of the Syk activation switch.</title>
        <authorList>
            <person name="Tsang E."/>
            <person name="Giannetti A.M."/>
            <person name="Shaw D."/>
            <person name="Dinh M."/>
            <person name="Tse J.K."/>
            <person name="Gandhi S."/>
            <person name="Ho H."/>
            <person name="Wang S."/>
            <person name="Papp E."/>
            <person name="Bradshaw J.M."/>
        </authorList>
    </citation>
    <scope>ACTIVITY REGULATION</scope>
</reference>
<reference key="21">
    <citation type="journal article" date="2008" name="J. Proteome Res.">
        <title>Phosphoproteome of resting human platelets.</title>
        <authorList>
            <person name="Zahedi R.P."/>
            <person name="Lewandrowski U."/>
            <person name="Wiesner J."/>
            <person name="Wortelkamp S."/>
            <person name="Moebius J."/>
            <person name="Schuetz C."/>
            <person name="Walter U."/>
            <person name="Gambaryan S."/>
            <person name="Sickmann A."/>
        </authorList>
    </citation>
    <scope>IDENTIFICATION BY MASS SPECTROMETRY [LARGE SCALE ANALYSIS]</scope>
    <source>
        <tissue>Platelet</tissue>
    </source>
</reference>
<reference key="22">
    <citation type="journal article" date="2009" name="J. Immunol.">
        <title>FCRL3, an autoimmune susceptibility gene, has inhibitory potential on B-cell receptor-mediated signaling.</title>
        <authorList>
            <person name="Kochi Y."/>
            <person name="Myouzen K."/>
            <person name="Yamada R."/>
            <person name="Suzuki A."/>
            <person name="Kurosaki T."/>
            <person name="Nakamura Y."/>
            <person name="Yamamoto K."/>
        </authorList>
    </citation>
    <scope>INTERACTION WITH FCRL3</scope>
</reference>
<reference key="23">
    <citation type="journal article" date="2009" name="Mol. Cell. Proteomics">
        <title>Large-scale proteomics analysis of the human kinome.</title>
        <authorList>
            <person name="Oppermann F.S."/>
            <person name="Gnad F."/>
            <person name="Olsen J.V."/>
            <person name="Hornberger R."/>
            <person name="Greff Z."/>
            <person name="Keri G."/>
            <person name="Mann M."/>
            <person name="Daub H."/>
        </authorList>
    </citation>
    <scope>PHOSPHORYLATION [LARGE SCALE ANALYSIS] AT TYR-323</scope>
    <scope>IDENTIFICATION BY MASS SPECTROMETRY [LARGE SCALE ANALYSIS]</scope>
</reference>
<reference key="24">
    <citation type="journal article" date="2009" name="Sci. Signal.">
        <title>Quantitative phosphoproteomic analysis of T cell receptor signaling reveals system-wide modulation of protein-protein interactions.</title>
        <authorList>
            <person name="Mayya V."/>
            <person name="Lundgren D.H."/>
            <person name="Hwang S.-I."/>
            <person name="Rezaul K."/>
            <person name="Wu L."/>
            <person name="Eng J.K."/>
            <person name="Rodionov V."/>
            <person name="Han D.K."/>
        </authorList>
    </citation>
    <scope>PHOSPHORYLATION [LARGE SCALE ANALYSIS] AT TYR-28</scope>
    <scope>IDENTIFICATION BY MASS SPECTROMETRY [LARGE SCALE ANALYSIS]</scope>
    <source>
        <tissue>Leukemic T-cell</tissue>
    </source>
</reference>
<reference key="25">
    <citation type="journal article" date="2010" name="Blood">
        <title>CLEC-2 activates Syk through dimerization.</title>
        <authorList>
            <person name="Hughes C.E."/>
            <person name="Pollitt A.Y."/>
            <person name="Mori J."/>
            <person name="Eble J.A."/>
            <person name="Tomlinson M.G."/>
            <person name="Hartwig J.H."/>
            <person name="O'Callaghan C.A."/>
            <person name="Fuetterer K."/>
            <person name="Watson S.P."/>
        </authorList>
    </citation>
    <scope>INTERACTION WITH CLEC1B</scope>
</reference>
<reference key="26">
    <citation type="journal article" date="2010" name="Exp. Cell Res.">
        <title>Functional interaction between the ubiquitin-specific protease 25 and the SYK tyrosine kinase.</title>
        <authorList>
            <person name="Cholay M."/>
            <person name="Reverdy C."/>
            <person name="Benarous R."/>
            <person name="Colland F."/>
            <person name="Daviet L."/>
        </authorList>
    </citation>
    <scope>INTERACTION WITH USP25</scope>
    <scope>FUNCTION</scope>
</reference>
<reference key="27">
    <citation type="journal article" date="2010" name="J. Exp. Med.">
        <title>A novel interaction between FlnA and Syk regulates platelet ITAM-mediated receptor signaling and function.</title>
        <authorList>
            <person name="Falet H."/>
            <person name="Pollitt A.Y."/>
            <person name="Begonja A.J."/>
            <person name="Weber S.E."/>
            <person name="Duerschmied D."/>
            <person name="Wagner D.D."/>
            <person name="Watson S.P."/>
            <person name="Hartwig J.H."/>
        </authorList>
    </citation>
    <scope>INTERACTION WITH FLNA</scope>
</reference>
<reference key="28">
    <citation type="journal article" date="2011" name="BMC Syst. Biol.">
        <title>Initial characterization of the human central proteome.</title>
        <authorList>
            <person name="Burkard T.R."/>
            <person name="Planyavsky M."/>
            <person name="Kaupe I."/>
            <person name="Breitwieser F.P."/>
            <person name="Buerckstuemmer T."/>
            <person name="Bennett K.L."/>
            <person name="Superti-Furga G."/>
            <person name="Colinge J."/>
        </authorList>
    </citation>
    <scope>IDENTIFICATION BY MASS SPECTROMETRY [LARGE SCALE ANALYSIS]</scope>
</reference>
<reference key="29">
    <citation type="journal article" date="2011" name="Eur. J. Immunol.">
        <title>Complex phosphorylation dynamics control the composition of the Syk interactome in B cells.</title>
        <authorList>
            <person name="Bohnenberger H."/>
            <person name="Oellerich T."/>
            <person name="Engelke M."/>
            <person name="Hsiao H.H."/>
            <person name="Urlaub H."/>
            <person name="Wienands J."/>
        </authorList>
    </citation>
    <scope>PHOSPHORYLATION AT TYR-28; SER-44; TYR-47; TYR-131; SER-202; THR-256; SER-295; TYR-296; SER-297; SER-316; THR-317; SER-319; TYR-323; THR-345; TYR-348; SER-350; TYR-352; TYR-364; SER-379; THR-384; TYR-484; TYR-507; TYR-525; TYR-526; THR-530; SER-579; THR-582; TYR-629; TYR-630 AND TYR-631</scope>
    <scope>INTERACTION WITH YWHAG</scope>
    <scope>MUTAGENESIS OF SER-297</scope>
    <source>
        <tissue>B-cell</tissue>
    </source>
</reference>
<reference key="30">
    <citation type="journal article" date="2012" name="Biochim. Biophys. Acta">
        <title>The protein-tyrosine kinase Syk interacts with the C-terminal region of tensin2.</title>
        <authorList>
            <person name="Moon K.D."/>
            <person name="Zhang X."/>
            <person name="Zhou Q."/>
            <person name="Geahlen R.L."/>
        </authorList>
    </citation>
    <scope>INTERACTION WITH TNS2</scope>
</reference>
<reference key="31">
    <citation type="journal article" date="2013" name="Nat. Commun.">
        <title>Germinal centre protein HGAL promotes lymphoid hyperplasia and amyloidosis via BCR-mediated Syk activation.</title>
        <authorList>
            <person name="Romero-Camarero I."/>
            <person name="Jiang X."/>
            <person name="Natkunam Y."/>
            <person name="Lu X."/>
            <person name="Vicente-Duenas C."/>
            <person name="Gonzalez-Herrero I."/>
            <person name="Flores T."/>
            <person name="Garcia J.L."/>
            <person name="McNamara G."/>
            <person name="Kunder C."/>
            <person name="Zhao S."/>
            <person name="Segura V."/>
            <person name="Fontan L."/>
            <person name="Martinez-Climent J.A."/>
            <person name="Garcia-Criado F.J."/>
            <person name="Theis J.D."/>
            <person name="Dogan A."/>
            <person name="Campos-Sanchez E."/>
            <person name="Green M.R."/>
            <person name="Alizadeh A.A."/>
            <person name="Cobaleda C."/>
            <person name="Sanchez-Garcia I."/>
            <person name="Lossos I.S."/>
        </authorList>
    </citation>
    <scope>INTERACTION WITH GCSAM</scope>
</reference>
<reference key="32">
    <citation type="journal article" date="2014" name="Exp. Hematol.">
        <title>Phosphorylated c-Mpl tyrosine 591 regulates thrombopoietin-induced signaling.</title>
        <authorList>
            <person name="Sangkhae V."/>
            <person name="Saur S.J."/>
            <person name="Kaushansky A."/>
            <person name="Kaushansky K."/>
            <person name="Hitchcock I.S."/>
        </authorList>
    </citation>
    <scope>INTERACTION WITH MPL/TPOR</scope>
</reference>
<reference key="33">
    <citation type="journal article" date="2021" name="J. Biol. Chem.">
        <title>Tyrosine phosphorylation of DEPTOR functions as a molecular switch to activate mTOR signaling.</title>
        <authorList>
            <person name="M Gagne L."/>
            <person name="Morin N."/>
            <person name="Lavoie N."/>
            <person name="Bisson N."/>
            <person name="Lambert J.P."/>
            <person name="Mallette F.A."/>
            <person name="Huot M.E."/>
        </authorList>
    </citation>
    <scope>FUNCTION</scope>
    <scope>CATALYTIC ACTIVITY</scope>
</reference>
<reference key="34">
    <citation type="journal article" date="2021" name="Nat. Genet.">
        <title>Gain-of-function variants in SYK cause immune dysregulation and systemic inflammation in humans and mice.</title>
        <authorList>
            <consortium name="Genomics England Research Consortium"/>
            <person name="Wang L."/>
            <person name="Aschenbrenner D."/>
            <person name="Zeng Z."/>
            <person name="Cao X."/>
            <person name="Mayr D."/>
            <person name="Mehta M."/>
            <person name="Capitani M."/>
            <person name="Warner N."/>
            <person name="Pan J."/>
            <person name="Wang L."/>
            <person name="Li Q."/>
            <person name="Zuo T."/>
            <person name="Cohen-Kedar S."/>
            <person name="Lu J."/>
            <person name="Ardy R.C."/>
            <person name="Mulder D.J."/>
            <person name="Dissanayake D."/>
            <person name="Peng K."/>
            <person name="Huang Z."/>
            <person name="Li X."/>
            <person name="Wang Y."/>
            <person name="Wang X."/>
            <person name="Li S."/>
            <person name="Bullers S."/>
            <person name="Gammage A.N."/>
            <person name="Warnatz K."/>
            <person name="Schiefer A.I."/>
            <person name="Krivan G."/>
            <person name="Goda V."/>
            <person name="Kahr W.H.A."/>
            <person name="Lemaire M."/>
            <person name="Lu C.Y."/>
            <person name="Siddiqui I."/>
            <person name="Surette M.G."/>
            <person name="Kotlarz D."/>
            <person name="Engelhardt K.R."/>
            <person name="Griffin H.R."/>
            <person name="Rottapel R."/>
            <person name="Decaluwe H."/>
            <person name="Laxer R.M."/>
            <person name="Proietti M."/>
            <person name="Hambleton S."/>
            <person name="Elcombe S."/>
            <person name="Guo C.H."/>
            <person name="Grimbacher B."/>
            <person name="Dotan I."/>
            <person name="Ng S.C."/>
            <person name="Freeman S.A."/>
            <person name="Snapper S.B."/>
            <person name="Klein C."/>
            <person name="Boztug K."/>
            <person name="Huang Y."/>
            <person name="Li D."/>
            <person name="Uhlig H.H."/>
            <person name="Muise A.M."/>
        </authorList>
    </citation>
    <scope>INVOLVEMENT IN IMD82</scope>
    <scope>VARIANTS IMD82 THR-342; THR-353; ILE-450; PHE-550 AND TYR-550</scope>
    <scope>CHARACTERIZATION OF VARIANTS IMD82 THR-342; THR-353; ILE-450; PHE-550 AND TYR-550</scope>
    <scope>FUNCTION</scope>
    <scope>CATALYTIC ACTIVITY</scope>
</reference>
<reference key="35">
    <citation type="journal article" date="1995" name="Structure">
        <title>Solution structure of the C-terminal SH2 domain of the human tyrosine kinase Syk complexed with a phosphotyrosine pentapeptide.</title>
        <authorList>
            <person name="Narula S.S."/>
            <person name="Yuan R.W."/>
            <person name="Adams S.E."/>
            <person name="Green O.M."/>
            <person name="Green J."/>
            <person name="Philips T.B."/>
            <person name="Zydowsky L.D."/>
            <person name="Botfield M.C."/>
            <person name="Hatada M."/>
            <person name="Laird E.R."/>
            <person name="Zoller M.J."/>
            <person name="Karas J.L."/>
            <person name="Dalgarno D.C."/>
        </authorList>
    </citation>
    <scope>STRUCTURE BY NMR OF 163-265</scope>
</reference>
<reference key="36">
    <citation type="journal article" date="1998" name="J. Mol. Biol.">
        <title>Structural basis for Syk tyrosine kinase ubiquity in signal transduction pathways revealed by the crystal structure of its regulatory SH2 domains bound to a dually phosphorylated ITAM peptide.</title>
        <authorList>
            <person name="Fuetterer K."/>
            <person name="Wong J."/>
            <person name="Grucza R.A."/>
            <person name="Chan A.C."/>
            <person name="Waksman G."/>
        </authorList>
    </citation>
    <scope>X-RAY CRYSTALLOGRAPHY (3.0 ANGSTROMS) OF SH2 DOMAINS IN COMPLEX WITH CD3E PHOSPHORYLATED ITAM DOMAIN</scope>
</reference>
<protein>
    <recommendedName>
        <fullName>Tyrosine-protein kinase SYK</fullName>
        <ecNumber evidence="5 23 24">2.7.10.2</ecNumber>
    </recommendedName>
    <alternativeName>
        <fullName>Spleen tyrosine kinase</fullName>
    </alternativeName>
    <alternativeName>
        <fullName>p72-Syk</fullName>
    </alternativeName>
</protein>
<organism>
    <name type="scientific">Homo sapiens</name>
    <name type="common">Human</name>
    <dbReference type="NCBI Taxonomy" id="9606"/>
    <lineage>
        <taxon>Eukaryota</taxon>
        <taxon>Metazoa</taxon>
        <taxon>Chordata</taxon>
        <taxon>Craniata</taxon>
        <taxon>Vertebrata</taxon>
        <taxon>Euteleostomi</taxon>
        <taxon>Mammalia</taxon>
        <taxon>Eutheria</taxon>
        <taxon>Euarchontoglires</taxon>
        <taxon>Primates</taxon>
        <taxon>Haplorrhini</taxon>
        <taxon>Catarrhini</taxon>
        <taxon>Hominidae</taxon>
        <taxon>Homo</taxon>
    </lineage>
</organism>
<evidence type="ECO:0000250" key="1"/>
<evidence type="ECO:0000250" key="2">
    <source>
        <dbReference type="UniProtKB" id="P48025"/>
    </source>
</evidence>
<evidence type="ECO:0000255" key="3">
    <source>
        <dbReference type="PROSITE-ProRule" id="PRU00159"/>
    </source>
</evidence>
<evidence type="ECO:0000255" key="4">
    <source>
        <dbReference type="PROSITE-ProRule" id="PRU00191"/>
    </source>
</evidence>
<evidence type="ECO:0000255" key="5">
    <source>
        <dbReference type="PROSITE-ProRule" id="PRU10028"/>
    </source>
</evidence>
<evidence type="ECO:0000269" key="6">
    <source>
    </source>
</evidence>
<evidence type="ECO:0000269" key="7">
    <source>
    </source>
</evidence>
<evidence type="ECO:0000269" key="8">
    <source>
    </source>
</evidence>
<evidence type="ECO:0000269" key="9">
    <source>
    </source>
</evidence>
<evidence type="ECO:0000269" key="10">
    <source>
    </source>
</evidence>
<evidence type="ECO:0000269" key="11">
    <source>
    </source>
</evidence>
<evidence type="ECO:0000269" key="12">
    <source>
    </source>
</evidence>
<evidence type="ECO:0000269" key="13">
    <source>
    </source>
</evidence>
<evidence type="ECO:0000269" key="14">
    <source>
    </source>
</evidence>
<evidence type="ECO:0000269" key="15">
    <source>
    </source>
</evidence>
<evidence type="ECO:0000269" key="16">
    <source>
    </source>
</evidence>
<evidence type="ECO:0000269" key="17">
    <source>
    </source>
</evidence>
<evidence type="ECO:0000269" key="18">
    <source>
    </source>
</evidence>
<evidence type="ECO:0000269" key="19">
    <source>
    </source>
</evidence>
<evidence type="ECO:0000269" key="20">
    <source>
    </source>
</evidence>
<evidence type="ECO:0000269" key="21">
    <source>
    </source>
</evidence>
<evidence type="ECO:0000269" key="22">
    <source>
    </source>
</evidence>
<evidence type="ECO:0000269" key="23">
    <source>
    </source>
</evidence>
<evidence type="ECO:0000269" key="24">
    <source>
    </source>
</evidence>
<evidence type="ECO:0000269" key="25">
    <source>
    </source>
</evidence>
<evidence type="ECO:0000269" key="26">
    <source>
    </source>
</evidence>
<evidence type="ECO:0000269" key="27">
    <source>
    </source>
</evidence>
<evidence type="ECO:0000269" key="28">
    <source>
    </source>
</evidence>
<evidence type="ECO:0000269" key="29">
    <source>
    </source>
</evidence>
<evidence type="ECO:0000269" key="30">
    <source>
    </source>
</evidence>
<evidence type="ECO:0000269" key="31">
    <source>
    </source>
</evidence>
<evidence type="ECO:0000303" key="32">
    <source>
    </source>
</evidence>
<evidence type="ECO:0000305" key="33"/>
<evidence type="ECO:0007744" key="34">
    <source>
    </source>
</evidence>
<evidence type="ECO:0007744" key="35">
    <source>
    </source>
</evidence>
<evidence type="ECO:0007829" key="36">
    <source>
        <dbReference type="PDB" id="1A81"/>
    </source>
</evidence>
<evidence type="ECO:0007829" key="37">
    <source>
        <dbReference type="PDB" id="1CSY"/>
    </source>
</evidence>
<evidence type="ECO:0007829" key="38">
    <source>
        <dbReference type="PDB" id="3SRV"/>
    </source>
</evidence>
<evidence type="ECO:0007829" key="39">
    <source>
        <dbReference type="PDB" id="4FL2"/>
    </source>
</evidence>
<evidence type="ECO:0007829" key="40">
    <source>
        <dbReference type="PDB" id="4FL3"/>
    </source>
</evidence>
<evidence type="ECO:0007829" key="41">
    <source>
        <dbReference type="PDB" id="4RX7"/>
    </source>
</evidence>
<evidence type="ECO:0007829" key="42">
    <source>
        <dbReference type="PDB" id="4YJR"/>
    </source>
</evidence>
<evidence type="ECO:0007829" key="43">
    <source>
        <dbReference type="PDB" id="5TT7"/>
    </source>
</evidence>
<evidence type="ECO:0007829" key="44">
    <source>
        <dbReference type="PDB" id="6ZCS"/>
    </source>
</evidence>
<evidence type="ECO:0007829" key="45">
    <source>
        <dbReference type="PDB" id="7SA7"/>
    </source>
</evidence>
<proteinExistence type="evidence at protein level"/>